<evidence type="ECO:0000250" key="1">
    <source>
        <dbReference type="UniProtKB" id="P61092"/>
    </source>
</evidence>
<evidence type="ECO:0000250" key="2">
    <source>
        <dbReference type="UniProtKB" id="Q920M9"/>
    </source>
</evidence>
<evidence type="ECO:0000255" key="3">
    <source>
        <dbReference type="PROSITE-ProRule" id="PRU00175"/>
    </source>
</evidence>
<evidence type="ECO:0000255" key="4">
    <source>
        <dbReference type="PROSITE-ProRule" id="PRU00455"/>
    </source>
</evidence>
<evidence type="ECO:0000256" key="5">
    <source>
        <dbReference type="SAM" id="MobiDB-lite"/>
    </source>
</evidence>
<evidence type="ECO:0000269" key="6">
    <source>
    </source>
</evidence>
<evidence type="ECO:0000269" key="7">
    <source>
    </source>
</evidence>
<evidence type="ECO:0000269" key="8">
    <source>
    </source>
</evidence>
<evidence type="ECO:0000269" key="9">
    <source>
    </source>
</evidence>
<evidence type="ECO:0000269" key="10">
    <source>
    </source>
</evidence>
<evidence type="ECO:0000269" key="11">
    <source>
    </source>
</evidence>
<evidence type="ECO:0000269" key="12">
    <source>
    </source>
</evidence>
<evidence type="ECO:0000269" key="13">
    <source>
    </source>
</evidence>
<evidence type="ECO:0000269" key="14">
    <source>
    </source>
</evidence>
<evidence type="ECO:0000269" key="15">
    <source>
    </source>
</evidence>
<evidence type="ECO:0000269" key="16">
    <source>
    </source>
</evidence>
<evidence type="ECO:0000269" key="17">
    <source>
    </source>
</evidence>
<evidence type="ECO:0000269" key="18">
    <source>
    </source>
</evidence>
<evidence type="ECO:0000269" key="19">
    <source>
    </source>
</evidence>
<evidence type="ECO:0000269" key="20">
    <source>
    </source>
</evidence>
<evidence type="ECO:0000269" key="21">
    <source>
    </source>
</evidence>
<evidence type="ECO:0000269" key="22">
    <source>
    </source>
</evidence>
<evidence type="ECO:0000269" key="23">
    <source>
    </source>
</evidence>
<evidence type="ECO:0000269" key="24">
    <source>
    </source>
</evidence>
<evidence type="ECO:0000269" key="25">
    <source>
    </source>
</evidence>
<evidence type="ECO:0000269" key="26">
    <source>
    </source>
</evidence>
<evidence type="ECO:0000269" key="27">
    <source>
    </source>
</evidence>
<evidence type="ECO:0000269" key="28">
    <source>
    </source>
</evidence>
<evidence type="ECO:0000269" key="29">
    <source>
    </source>
</evidence>
<evidence type="ECO:0000269" key="30">
    <source>
    </source>
</evidence>
<evidence type="ECO:0000269" key="31">
    <source>
    </source>
</evidence>
<evidence type="ECO:0000269" key="32">
    <source>
    </source>
</evidence>
<evidence type="ECO:0000269" key="33">
    <source>
    </source>
</evidence>
<evidence type="ECO:0000303" key="34">
    <source>
    </source>
</evidence>
<evidence type="ECO:0000303" key="35">
    <source>
    </source>
</evidence>
<evidence type="ECO:0000303" key="36">
    <source>
    </source>
</evidence>
<evidence type="ECO:0000305" key="37"/>
<evidence type="ECO:0007744" key="38">
    <source>
        <dbReference type="PDB" id="2A25"/>
    </source>
</evidence>
<evidence type="ECO:0007744" key="39">
    <source>
        <dbReference type="PDB" id="5WZZ"/>
    </source>
</evidence>
<evidence type="ECO:0007829" key="40">
    <source>
        <dbReference type="PDB" id="4CA1"/>
    </source>
</evidence>
<evidence type="ECO:0007829" key="41">
    <source>
        <dbReference type="PDB" id="4I7B"/>
    </source>
</evidence>
<evidence type="ECO:0007829" key="42">
    <source>
        <dbReference type="PDB" id="4X3G"/>
    </source>
</evidence>
<evidence type="ECO:0007829" key="43">
    <source>
        <dbReference type="PDB" id="5WZZ"/>
    </source>
</evidence>
<reference key="1">
    <citation type="journal article" date="1996" name="Proc. Natl. Acad. Sci. U.S.A.">
        <title>Activation of the human homologue of the Drosophila sina gene in apoptosis and tumor suppression.</title>
        <authorList>
            <person name="Nemani M."/>
            <person name="Linares-Cruz G."/>
            <person name="Bruzzoni-Giovanelli H."/>
            <person name="Roperch J.-P."/>
            <person name="Tuynder M."/>
            <person name="Bougueleret L."/>
            <person name="Cherif D."/>
            <person name="Medhioub M."/>
            <person name="Pasturaud P."/>
            <person name="Alvaro V."/>
            <person name="Der Sarkissan H."/>
            <person name="Cazes L."/>
            <person name="Le Paslier D."/>
            <person name="Le Gall I."/>
            <person name="Israeli D."/>
            <person name="Dausset J."/>
            <person name="Sigaux F."/>
            <person name="Chumakov I."/>
            <person name="Oren M."/>
            <person name="Calvo F."/>
            <person name="Amson R.B."/>
            <person name="Cohen D."/>
            <person name="Telerman A."/>
        </authorList>
    </citation>
    <scope>NUCLEOTIDE SEQUENCE [MRNA] (ISOFORM 1)</scope>
    <source>
        <tissue>Intestinal epithelium</tissue>
    </source>
</reference>
<reference key="2">
    <citation type="journal article" date="1997" name="Genomics">
        <title>Characterization of human homologs of the Drosophila seven in absentia (sina) gene.</title>
        <authorList>
            <person name="Hu G."/>
            <person name="Chung Y.-L."/>
            <person name="Glover T."/>
            <person name="Valentine V."/>
            <person name="Look A.T."/>
            <person name="Fearon E.R."/>
        </authorList>
    </citation>
    <scope>NUCLEOTIDE SEQUENCE [MRNA] (ISOFORM 1)</scope>
    <scope>SUBCELLULAR LOCATION</scope>
    <scope>TISSUE SPECIFICITY</scope>
    <source>
        <tissue>Fetal brain</tissue>
    </source>
</reference>
<reference key="3">
    <citation type="journal article" date="2000" name="Int. J. Cancer">
        <title>Lack of somatic mutation in the coding sequence of SIAH1 in tumors hemizygous for this candidate tumor suppressor gene.</title>
        <authorList>
            <person name="Medhioub M."/>
            <person name="Vaury C."/>
            <person name="Hamelin R."/>
            <person name="Thomas G."/>
        </authorList>
    </citation>
    <scope>NUCLEOTIDE SEQUENCE [GENOMIC DNA]</scope>
</reference>
<reference key="4">
    <citation type="journal article" date="2007" name="Oncogene">
        <title>Siah-1S, a novel splice variant of Siah-1 (seven in absentia homolog), counteracts Siah-1-mediated downregulation of beta-catenin.</title>
        <authorList>
            <person name="Mei Y."/>
            <person name="Xie C."/>
            <person name="Xie W."/>
            <person name="Wu Z."/>
            <person name="Wu M."/>
        </authorList>
    </citation>
    <scope>NUCLEOTIDE SEQUENCE [MRNA] (ISOFORM 3)</scope>
</reference>
<reference key="5">
    <citation type="journal article" date="2007" name="BMC Genomics">
        <title>The full-ORF clone resource of the German cDNA consortium.</title>
        <authorList>
            <person name="Bechtel S."/>
            <person name="Rosenfelder H."/>
            <person name="Duda A."/>
            <person name="Schmidt C.P."/>
            <person name="Ernst U."/>
            <person name="Wellenreuther R."/>
            <person name="Mehrle A."/>
            <person name="Schuster C."/>
            <person name="Bahr A."/>
            <person name="Bloecker H."/>
            <person name="Heubner D."/>
            <person name="Hoerlein A."/>
            <person name="Michel G."/>
            <person name="Wedler H."/>
            <person name="Koehrer K."/>
            <person name="Ottenwaelder B."/>
            <person name="Poustka A."/>
            <person name="Wiemann S."/>
            <person name="Schupp I."/>
        </authorList>
    </citation>
    <scope>NUCLEOTIDE SEQUENCE [LARGE SCALE MRNA] (ISOFORM 2)</scope>
    <source>
        <tissue>Retina</tissue>
    </source>
</reference>
<reference key="6">
    <citation type="journal article" date="2004" name="Genome Res.">
        <title>The status, quality, and expansion of the NIH full-length cDNA project: the Mammalian Gene Collection (MGC).</title>
        <authorList>
            <consortium name="The MGC Project Team"/>
        </authorList>
    </citation>
    <scope>NUCLEOTIDE SEQUENCE [LARGE SCALE MRNA] (ISOFORMS 1 AND 2)</scope>
    <source>
        <tissue>Brain</tissue>
        <tissue>Pancreas</tissue>
        <tissue>Testis</tissue>
    </source>
</reference>
<reference key="7">
    <citation type="journal article" date="1997" name="Genes Dev.">
        <title>Mammalian homologs of seven in absentia regulate DCC via the ubiquitin-proteasome pathway.</title>
        <authorList>
            <person name="Hu G."/>
            <person name="Zhang S."/>
            <person name="Vidal M."/>
            <person name="Baer J.L."/>
            <person name="Xu T."/>
            <person name="Fearon E.R."/>
        </authorList>
    </citation>
    <scope>FUNCTION IN DEGRADATION OF DCC</scope>
    <scope>SUBCELLULAR LOCATION</scope>
    <scope>INTERACTION WITH UBE2I AND DCC</scope>
</reference>
<reference key="8">
    <citation type="journal article" date="1998" name="EMBO J.">
        <title>p53-inducible human homologue of Drosophila seven in absentia (Siah) inhibits cell growth: suppression by BAG-1.</title>
        <authorList>
            <person name="Matsuzawa S."/>
            <person name="Takayama S."/>
            <person name="Froesch B.A."/>
            <person name="Zapata J.M."/>
            <person name="Reed J.C."/>
        </authorList>
    </citation>
    <scope>INTERACTION WITH BAG1</scope>
    <scope>SUBCELLULAR LOCATION</scope>
</reference>
<reference key="9">
    <citation type="journal article" date="1999" name="Mol. Cell. Biol.">
        <title>Siah-1 N-terminal RING domain is required for proteolysis function, and C-terminal sequences regulate oligomerization and binding to target proteins.</title>
        <authorList>
            <person name="Hu G."/>
            <person name="Fearon E.R."/>
        </authorList>
    </citation>
    <scope>FUNCTION</scope>
    <scope>SUBCELLULAR LOCATION</scope>
    <scope>MUTAGENESIS OF GLU-40; CYS-41; CYS-44; CYS-55; HIS-59; ARG-66; LYS-68; ARG-76; HIS-152; HIS-202 AND LEU-211</scope>
</reference>
<reference key="10">
    <citation type="journal article" date="2000" name="Oncogene">
        <title>SIAH-1 interacts with alpha-tubulin and degrades the kinesin Kid by the proteasome pathway during mitosis.</title>
        <authorList>
            <person name="Germani A."/>
            <person name="Bruzzoni-Giovanelli H."/>
            <person name="Fellous A."/>
            <person name="Gisselbrecht S."/>
            <person name="Varin-Blank N."/>
            <person name="Calvo F."/>
        </authorList>
    </citation>
    <scope>FUNCTION IN DEGRADATION OF KIF22</scope>
    <scope>INTERACTION WITH ALPHA-TUBULIN</scope>
</reference>
<reference key="11">
    <citation type="journal article" date="2000" name="J. Biol. Chem.">
        <title>p53 suppresses the c-Myb-induced activation of heat shock transcription factor 3.</title>
        <authorList>
            <person name="Tanikawa J."/>
            <person name="Ichikawa-Iwata E."/>
            <person name="Kanei-Ishii C."/>
            <person name="Nakai A."/>
            <person name="Matsuzawa S."/>
            <person name="Reed J.C."/>
            <person name="Ishii S."/>
        </authorList>
    </citation>
    <scope>FUNCTION IN DEGRADATION OF MYB</scope>
</reference>
<reference key="12">
    <citation type="journal article" date="2001" name="Mol. Cell">
        <title>Siah-1, SIP, and Ebi collaborate in a novel pathway for beta-catenin degradation linked to p53 responses.</title>
        <authorList>
            <person name="Matsuzawa S."/>
            <person name="Reed J.C."/>
        </authorList>
    </citation>
    <scope>FUNCTION IN DEGRADATION OF CTNNB1</scope>
    <scope>SUBUNIT OF A COMPLEX WITH UBE2D1; CACYBP; SKP1; APC AND TBL1X</scope>
</reference>
<reference key="13">
    <citation type="journal article" date="2001" name="Mol. Cell">
        <title>Siah-1 mediates a novel beta-catenin degradation pathway linking p53 to the adenomatous polyposis coli protein.</title>
        <authorList>
            <person name="Liu J."/>
            <person name="Stevens J."/>
            <person name="Rote C.A."/>
            <person name="Yost H.J."/>
            <person name="Hu Y."/>
            <person name="Neufeld K.L."/>
            <person name="White R.L."/>
            <person name="Matsunami N."/>
        </authorList>
    </citation>
    <scope>FUNCTION IN DEGRADATION OF CTNNB1</scope>
</reference>
<reference key="14">
    <citation type="journal article" date="2001" name="EMBO J.">
        <title>The RING finger protein Siah-1 regulates the level of the transcriptional coactivator OBF-1.</title>
        <authorList>
            <person name="Tiedt R."/>
            <person name="Bartholdy B.A."/>
            <person name="Matthias G."/>
            <person name="Newell J.W."/>
            <person name="Matthias P."/>
        </authorList>
    </citation>
    <scope>FUNCTION IN DEGRADATION OF POU2AF1</scope>
    <scope>SUBCELLULAR LOCATION</scope>
</reference>
<reference key="15">
    <citation type="journal article" date="2001" name="EMBO J.">
        <title>Regulation of BOB.1/OBF.1 stability by SIAH.</title>
        <authorList>
            <person name="Boehm J."/>
            <person name="He Y."/>
            <person name="Greiner A."/>
            <person name="Staudt L."/>
            <person name="Wirth T."/>
        </authorList>
    </citation>
    <scope>FUNCTION IN DEGRADATION OF POU2AF1</scope>
</reference>
<reference key="16">
    <citation type="journal article" date="2001" name="Proc. Natl. Acad. Sci. U.S.A.">
        <title>Siah-1 binds and regulates the function of Numb.</title>
        <authorList>
            <person name="Susini L."/>
            <person name="Passer B.J."/>
            <person name="Amzallag-Elbaz N."/>
            <person name="Juven-Gershon T."/>
            <person name="Prieur S."/>
            <person name="Privat N."/>
            <person name="Tuynder M."/>
            <person name="Gendron M.-C."/>
            <person name="Israeel A."/>
            <person name="Amson R."/>
            <person name="Oren M."/>
            <person name="Telerman A."/>
        </authorList>
    </citation>
    <scope>FUNCTION IN DEGRADATION OF NUMB</scope>
</reference>
<reference key="17">
    <citation type="journal article" date="2002" name="J. Biol. Chem.">
        <title>Modulation of transforming growth factor beta (TGFbeta)/Smad transcriptional responses through targeted degradation of TGFbeta-inducible early gene-1 by human seven in absentia homologue.</title>
        <authorList>
            <person name="Johnsen S.A."/>
            <person name="Subramaniam M."/>
            <person name="Monroe D.G."/>
            <person name="Janknecht R."/>
            <person name="Spelsberg T.C."/>
        </authorList>
    </citation>
    <scope>FUNCTION IN DEGRADATION OF KLF10</scope>
</reference>
<reference key="18">
    <citation type="journal article" date="2003" name="J. Biol. Chem.">
        <title>Siah-1 facilitates ubiquitination and degradation of synphilin-1.</title>
        <authorList>
            <person name="Nagano Y."/>
            <person name="Yamashita H."/>
            <person name="Takahashi T."/>
            <person name="Kishida S."/>
            <person name="Nakamura T."/>
            <person name="Iseki E."/>
            <person name="Hattori N."/>
            <person name="Mizuno Y."/>
            <person name="Kikuchi A."/>
            <person name="Matsumoto M."/>
        </authorList>
    </citation>
    <scope>FUNCTION IN DEGRADATION OF SNCAIP</scope>
    <scope>SUBCELLULAR LOCATION</scope>
</reference>
<reference key="19">
    <citation type="journal article" date="2003" name="Cancer Res.">
        <title>Involvement of PEG10 in human hepatocellular carcinogenesis through interaction with SIAH1.</title>
        <authorList>
            <person name="Okabe H."/>
            <person name="Satoh S."/>
            <person name="Furukawa Y."/>
            <person name="Kato T."/>
            <person name="Hasegawa S."/>
            <person name="Nakajima Y."/>
            <person name="Yamaoka Y."/>
            <person name="Nakamura Y."/>
        </authorList>
    </citation>
    <scope>INTERACTION WITH PEG10</scope>
</reference>
<reference key="20">
    <citation type="journal article" date="2003" name="Genes Chromosomes Cancer">
        <title>SIAH1 inactivation correlates with tumor progression in hepatocellular carcinomas.</title>
        <authorList>
            <person name="Matsuo K."/>
            <person name="Satoh S."/>
            <person name="Okabe H."/>
            <person name="Nomura A."/>
            <person name="Maeda T."/>
            <person name="Yamaoka Y."/>
            <person name="Ikai I."/>
        </authorList>
    </citation>
    <scope>TISSUE SPECIFICITY</scope>
</reference>
<reference key="21">
    <citation type="journal article" date="2003" name="Oncogene">
        <title>SIAH-1 interacts with CtIP and promotes its degradation by the proteasome pathway.</title>
        <authorList>
            <person name="Germani A."/>
            <person name="Prabel A."/>
            <person name="Mourah S."/>
            <person name="Podgorniak M.-P."/>
            <person name="Di Carlo A."/>
            <person name="Ehrlich R."/>
            <person name="Gisselbrecht S."/>
            <person name="Varin-Blank N."/>
            <person name="Calvo F."/>
            <person name="Bruzzoni-Giovanelli H."/>
        </authorList>
    </citation>
    <scope>FUNCTION IN DEGRADATION OF RBBP8</scope>
</reference>
<reference key="22">
    <citation type="journal article" date="2003" name="J. Biol. Chem.">
        <title>Structural analysis of Siah1 and its interactions with Siah-interacting protein (SIP).</title>
        <authorList>
            <person name="Matsuzawa S."/>
            <person name="Li C."/>
            <person name="Ni C.-Z."/>
            <person name="Takayama S."/>
            <person name="Reed J.C."/>
            <person name="Ely K.R."/>
        </authorList>
    </citation>
    <scope>INTERACTION WITH CACYBP</scope>
    <scope>MUTANTS A; B; C; D AND E</scope>
    <scope>MUTAGENESIS OF ARG-124; ASP-142; GLN-151; ARG-224; GLU-226; ARG-233; GLU-237; ASN-253 AND GLN-265</scope>
</reference>
<reference key="23">
    <citation type="journal article" date="2004" name="Hum. Mol. Genet.">
        <title>SIAH1 targets the alternative splicing factor T-STAR for degradation by the proteasome.</title>
        <authorList>
            <person name="Venables J.P."/>
            <person name="Dalgliesh C."/>
            <person name="Paronetto M.P."/>
            <person name="Skitt L."/>
            <person name="Thornton J.K."/>
            <person name="Saunders P.T."/>
            <person name="Sette C."/>
            <person name="Jones K.T."/>
            <person name="Elliott D.J."/>
        </authorList>
    </citation>
    <scope>INTERACTION WITH KHDRBS3</scope>
</reference>
<reference key="24">
    <citation type="journal article" date="2004" name="J. Biol. Chem.">
        <title>The coiled-coil domain is the structural determinant for mammalian homologues of Drosophila Sina-mediated degradation of promyelocytic leukemia protein and other tripartite motif proteins by the proteasome.</title>
        <authorList>
            <person name="Fanelli M."/>
            <person name="Fantozzi A."/>
            <person name="De Luca P."/>
            <person name="Caprodossi S."/>
            <person name="Matsuzawa S."/>
            <person name="Lazar M.A."/>
            <person name="Pelicci P.G."/>
            <person name="Minucci S."/>
        </authorList>
    </citation>
    <scope>FUNCTION IN DEGRADATION OF PML</scope>
    <scope>MUTANTS A AND D</scope>
</reference>
<reference key="25">
    <citation type="journal article" date="2004" name="Proc. Natl. Acad. Sci. U.S.A.">
        <title>Ubiquitylation of synphilin-1 and alpha-synuclein by SIAH and its presence in cellular inclusions and Lewy bodies imply a role in Parkinson's disease.</title>
        <authorList>
            <person name="Liani E."/>
            <person name="Eyal A."/>
            <person name="Avraham E."/>
            <person name="Shemer R."/>
            <person name="Szargel R."/>
            <person name="Berg D."/>
            <person name="Bornemann A."/>
            <person name="Riess O."/>
            <person name="Ross C.A."/>
            <person name="Rott R."/>
            <person name="Engelender S."/>
        </authorList>
    </citation>
    <scope>FUNCTION</scope>
    <scope>SUBCELLULAR LOCATION</scope>
    <scope>INTERACTION WITH SNCAIP AND SNCA</scope>
    <scope>MUTAGENESIS OF CYS-55; HIS-59 AND CYS-72</scope>
</reference>
<reference key="26">
    <citation type="journal article" date="2008" name="Nat. Cell Biol.">
        <title>Control of HIPK2 stability by ubiquitin ligase Siah-1 and checkpoint kinases ATM and ATR.</title>
        <authorList>
            <person name="Winter M."/>
            <person name="Sombroek D."/>
            <person name="Dauth I."/>
            <person name="Moehlenbrink J."/>
            <person name="Scheuermann K."/>
            <person name="Crone J."/>
            <person name="Hofmann T.G."/>
        </authorList>
    </citation>
    <scope>FUNCTION</scope>
    <scope>MUTAGENESIS OF SER-19 AND CYS-44</scope>
    <scope>INTERACTION WITH HIPK2</scope>
    <scope>PHOSPHORYLATION AT SER-19 BY ATM AND ATR</scope>
</reference>
<reference key="27">
    <citation type="journal article" date="2008" name="Proc. Natl. Acad. Sci. U.S.A.">
        <title>A quantitative atlas of mitotic phosphorylation.</title>
        <authorList>
            <person name="Dephoure N."/>
            <person name="Zhou C."/>
            <person name="Villen J."/>
            <person name="Beausoleil S.A."/>
            <person name="Bakalarski C.E."/>
            <person name="Elledge S.J."/>
            <person name="Gygi S.P."/>
        </authorList>
    </citation>
    <scope>IDENTIFICATION BY MASS SPECTROMETRY [LARGE SCALE ANALYSIS]</scope>
    <source>
        <tissue>Cervix carcinoma</tissue>
    </source>
</reference>
<reference key="28">
    <citation type="journal article" date="2009" name="J. Biol. Chem.">
        <title>Synphilin-1A inhibits seven in absentia homolog (SIAH) and modulates alpha-synuclein monoubiquitylation and inclusion formation.</title>
        <authorList>
            <person name="Szargel R."/>
            <person name="Rott R."/>
            <person name="Eyal A."/>
            <person name="Haskin J."/>
            <person name="Shani V."/>
            <person name="Balan L."/>
            <person name="Wolosker H."/>
            <person name="Engelender S."/>
        </authorList>
    </citation>
    <scope>INTERACTION WITH SNCAIP</scope>
    <scope>CATALYTIC ACTIVITY</scope>
    <scope>ACTIVITY REGULATION</scope>
    <scope>FUNCTION</scope>
    <scope>PATHWAY</scope>
</reference>
<reference key="29">
    <citation type="journal article" date="2010" name="Leukemia">
        <title>Ubiquitin conjugase UBCH8 targets active FMS-like tyrosine kinase 3 for proteasomal degradation.</title>
        <authorList>
            <person name="Buchwald M."/>
            <person name="Pietschmann K."/>
            <person name="Muller J.P."/>
            <person name="Bohmer F.D."/>
            <person name="Heinzel T."/>
            <person name="Kramer O.H."/>
        </authorList>
    </citation>
    <scope>FUNCTION IN UBIQUITINATION OF FLT3</scope>
</reference>
<reference key="30">
    <citation type="journal article" date="2012" name="Mol. Cell">
        <title>The ubiquitin ligase Siah1 controls ELL2 stability and formation of super elongation complexes to modulate gene transcription.</title>
        <authorList>
            <person name="Liu M."/>
            <person name="Hsu J."/>
            <person name="Chan C."/>
            <person name="Li Z."/>
            <person name="Zhou Q."/>
        </authorList>
    </citation>
    <scope>FUNCTION</scope>
</reference>
<reference key="31">
    <citation type="journal article" date="2021" name="Nucleic Acids Res.">
        <title>DAZAP2 acts as specifier of the p53 response to DNA damage.</title>
        <authorList>
            <person name="Liebl M.C."/>
            <person name="Moehlenbrink J."/>
            <person name="Becker H."/>
            <person name="Raddatz G."/>
            <person name="Abdeen S.K."/>
            <person name="Aqeilan R.I."/>
            <person name="Lyko F."/>
            <person name="Hofmann T.G."/>
        </authorList>
    </citation>
    <scope>FUNCTION</scope>
    <scope>INTERACTION WITH DAZAP2 AND HIPK2</scope>
</reference>
<reference evidence="38" key="32">
    <citation type="journal article" date="2005" name="J. Biol. Chem.">
        <title>Structural analysis of Siah1-Siah-interacting protein interactions and insights into the assembly of an E3 ligase multiprotein complex.</title>
        <authorList>
            <person name="Santelli E."/>
            <person name="Leone M."/>
            <person name="Li C."/>
            <person name="Fukushima T."/>
            <person name="Preece N.E."/>
            <person name="Olson A.J."/>
            <person name="Ely K.R."/>
            <person name="Reed J.C."/>
            <person name="Pellecchia M."/>
            <person name="Liddington R.C."/>
            <person name="Matsuzawa S."/>
        </authorList>
    </citation>
    <scope>X-RAY CRYSTALLOGRAPHY (2.2 ANGSTROMS) OF 90-282 IN COMPLEX WITH ZINC IONS AND CACYBP</scope>
    <scope>FUNCTION</scope>
    <scope>MUTAGENESIS OF 198-LYS--ASP-200 AND MET-252</scope>
    <scope>INTERACTION WITH CACYBP</scope>
</reference>
<reference evidence="39" key="33">
    <citation type="journal article" date="2017" name="Genes Dev.">
        <title>The SIAH E3 ubiquitin ligases promote Wnt/beta-catenin signaling through mediating Wnt-induced Axin degradation.</title>
        <authorList>
            <person name="Ji L."/>
            <person name="Jiang B."/>
            <person name="Jiang X."/>
            <person name="Charlat O."/>
            <person name="Chen A."/>
            <person name="Mickanin C."/>
            <person name="Bauer A."/>
            <person name="Xu W."/>
            <person name="Yan X."/>
            <person name="Cong F."/>
        </authorList>
    </citation>
    <scope>X-RAY CRYSTALLOGRAPHY (2.10 ANGSTROMS) OF 93-282 IN COMPLEX WITH ZINC IONS AND AXIN1</scope>
    <scope>INTERACTION WITH AXIN1</scope>
    <scope>FUNCTION</scope>
    <scope>CATALYTIC ACTIVITY</scope>
    <scope>PATHWAY</scope>
</reference>
<reference key="34">
    <citation type="journal article" date="2021" name="J. Med. Genet.">
        <title>De novo variants in SIAH1, encoding an E3 ubiquitin ligase, are associated with developmental delay, hypotonia and dysmorphic features.</title>
        <authorList>
            <person name="Buratti J."/>
            <person name="Ji L."/>
            <person name="Keren B."/>
            <person name="Lee Y."/>
            <person name="Booke S."/>
            <person name="Erdin S."/>
            <person name="Kim S.Y."/>
            <person name="Palculict T.B."/>
            <person name="Meiner V."/>
            <person name="Chae J.H."/>
            <person name="Woods C.G."/>
            <person name="Tam A."/>
            <person name="Heron D."/>
            <person name="Cong F."/>
            <person name="Harel T."/>
        </authorList>
    </citation>
    <scope>VARIANTS BURHAS GLY-41; LEU-50; PHE-128; ALA-168 AND ARG-174</scope>
    <scope>CHARACTERIZATION OF VARIANTS BURHAS GLY-41; LEU-50; PHE-128; ALA-168 AND ARG-174</scope>
    <scope>FUNCTION</scope>
</reference>
<feature type="chain" id="PRO_0000056163" description="E3 ubiquitin-protein ligase SIAH1">
    <location>
        <begin position="1"/>
        <end position="282"/>
    </location>
</feature>
<feature type="zinc finger region" description="RING-type" evidence="3">
    <location>
        <begin position="41"/>
        <end position="76"/>
    </location>
</feature>
<feature type="zinc finger region" description="SIAH-type" evidence="4">
    <location>
        <begin position="93"/>
        <end position="153"/>
    </location>
</feature>
<feature type="region of interest" description="Disordered" evidence="5">
    <location>
        <begin position="1"/>
        <end position="22"/>
    </location>
</feature>
<feature type="region of interest" description="SBD" evidence="1">
    <location>
        <begin position="90"/>
        <end position="282"/>
    </location>
</feature>
<feature type="compositionally biased region" description="Polar residues" evidence="5">
    <location>
        <begin position="1"/>
        <end position="17"/>
    </location>
</feature>
<feature type="binding site" evidence="27 39">
    <location>
        <position position="98"/>
    </location>
    <ligand>
        <name>Zn(2+)</name>
        <dbReference type="ChEBI" id="CHEBI:29105"/>
        <label>1</label>
    </ligand>
</feature>
<feature type="binding site" evidence="27 39">
    <location>
        <position position="105"/>
    </location>
    <ligand>
        <name>Zn(2+)</name>
        <dbReference type="ChEBI" id="CHEBI:29105"/>
        <label>1</label>
    </ligand>
</feature>
<feature type="binding site" evidence="27 39">
    <location>
        <position position="117"/>
    </location>
    <ligand>
        <name>Zn(2+)</name>
        <dbReference type="ChEBI" id="CHEBI:29105"/>
        <label>1</label>
    </ligand>
</feature>
<feature type="binding site" evidence="27 39">
    <location>
        <position position="121"/>
    </location>
    <ligand>
        <name>Zn(2+)</name>
        <dbReference type="ChEBI" id="CHEBI:29105"/>
        <label>1</label>
    </ligand>
</feature>
<feature type="binding site" evidence="22 27 38 39">
    <location>
        <position position="128"/>
    </location>
    <ligand>
        <name>Zn(2+)</name>
        <dbReference type="ChEBI" id="CHEBI:29105"/>
        <label>2</label>
    </ligand>
</feature>
<feature type="binding site" evidence="22 27 38 39">
    <location>
        <position position="135"/>
    </location>
    <ligand>
        <name>Zn(2+)</name>
        <dbReference type="ChEBI" id="CHEBI:29105"/>
        <label>2</label>
    </ligand>
</feature>
<feature type="binding site" evidence="22 27 38 39">
    <location>
        <position position="147"/>
    </location>
    <ligand>
        <name>Zn(2+)</name>
        <dbReference type="ChEBI" id="CHEBI:29105"/>
        <label>2</label>
    </ligand>
</feature>
<feature type="binding site" evidence="22 27 38 39">
    <location>
        <position position="152"/>
    </location>
    <ligand>
        <name>Zn(2+)</name>
        <dbReference type="ChEBI" id="CHEBI:29105"/>
        <label>2</label>
    </ligand>
</feature>
<feature type="modified residue" description="Phosphoserine; by ATM and ATR" evidence="23">
    <location>
        <position position="19"/>
    </location>
</feature>
<feature type="splice variant" id="VSP_010166" description="In isoform 2." evidence="34 36">
    <original>M</original>
    <variation>MTGKATPPSLYSWRGVLFTCLPAARTRKRKEM</variation>
    <location>
        <position position="1"/>
    </location>
</feature>
<feature type="splice variant" id="VSP_029210" description="In isoform 3." evidence="35">
    <original>LEK</original>
    <variation>DLS</variation>
    <location>
        <begin position="193"/>
        <end position="195"/>
    </location>
</feature>
<feature type="splice variant" id="VSP_029211" description="In isoform 3." evidence="35">
    <location>
        <begin position="196"/>
        <end position="282"/>
    </location>
</feature>
<feature type="sequence variant" id="VAR_085780" description="In BURHAS; loss of function in Wnt signaling pathway." evidence="28">
    <original>C</original>
    <variation>G</variation>
    <location>
        <position position="41"/>
    </location>
</feature>
<feature type="sequence variant" id="VAR_085781" description="In BURHAS." evidence="28">
    <original>P</original>
    <variation>L</variation>
    <location>
        <position position="50"/>
    </location>
</feature>
<feature type="sequence variant" id="VAR_085782" description="In BURHAS; loss of function in Wnt signaling pathway." evidence="28">
    <original>C</original>
    <variation>F</variation>
    <location>
        <position position="128"/>
    </location>
</feature>
<feature type="sequence variant" id="VAR_085783" description="In BURHAS; loss of function in Wnt signaling pathway." evidence="28">
    <original>T</original>
    <variation>A</variation>
    <location>
        <position position="168"/>
    </location>
</feature>
<feature type="sequence variant" id="VAR_085784" description="In BURHAS; loss of function in Wnt signaling pathway." evidence="28">
    <original>G</original>
    <variation>R</variation>
    <location>
        <position position="174"/>
    </location>
</feature>
<feature type="mutagenesis site" description="Impaired ATM mediated phosphorylation, but normal interaction with HIPK2 and HIPK2 subsequent proteasomal degradation." evidence="23">
    <original>S</original>
    <variation>A</variation>
    <location>
        <position position="19"/>
    </location>
</feature>
<feature type="mutagenesis site" description="Reduced interaction with HIPK2 and HIPK2 subsequent proteasomal degradation." evidence="23">
    <original>S</original>
    <variation>D</variation>
    <location>
        <position position="19"/>
    </location>
</feature>
<feature type="mutagenesis site" description="Loss of function." evidence="33">
    <original>E</original>
    <variation>R</variation>
    <location>
        <position position="40"/>
    </location>
</feature>
<feature type="mutagenesis site" description="Loss of function; when associated with S-44." evidence="33">
    <original>C</original>
    <variation>S</variation>
    <location>
        <position position="41"/>
    </location>
</feature>
<feature type="mutagenesis site" description="Loss of function." evidence="23 33">
    <original>C</original>
    <variation>S</variation>
    <location>
        <position position="44"/>
    </location>
</feature>
<feature type="mutagenesis site" description="Loss of function; when associated with A-59 and S-72." evidence="20 33">
    <original>C</original>
    <variation>A</variation>
    <location>
        <position position="55"/>
    </location>
</feature>
<feature type="mutagenesis site" description="Loss of function; when associated with Y-59." evidence="20 33">
    <original>C</original>
    <variation>S</variation>
    <location>
        <position position="55"/>
    </location>
</feature>
<feature type="mutagenesis site" description="Loss of function; when associated with A-55 and S-72." evidence="20 33">
    <original>H</original>
    <variation>A</variation>
    <location>
        <position position="59"/>
    </location>
</feature>
<feature type="mutagenesis site" description="Loss of function." evidence="20 33">
    <original>H</original>
    <variation>Y</variation>
    <location>
        <position position="59"/>
    </location>
</feature>
<feature type="mutagenesis site" description="Decreased activity; when associated with T-68." evidence="33">
    <original>R</original>
    <variation>L</variation>
    <location>
        <position position="66"/>
    </location>
</feature>
<feature type="mutagenesis site" description="Decreased activity; when associated with L-66." evidence="33">
    <original>K</original>
    <variation>T</variation>
    <location>
        <position position="68"/>
    </location>
</feature>
<feature type="mutagenesis site" description="Loss of function; when associated with A-55 and A-59." evidence="20">
    <original>C</original>
    <variation>S</variation>
    <location>
        <position position="72"/>
    </location>
</feature>
<feature type="mutagenesis site" description="Decreased activity." evidence="33">
    <original>R</original>
    <variation>E</variation>
    <location>
        <position position="76"/>
    </location>
</feature>
<feature type="mutagenesis site" description="In D; does not impair its ability to interact with CACYBP and degrade CTNNB1 and PML; when associated with A-214; A-215; A-231 and A-232." evidence="14 18">
    <original>R</original>
    <variation>A</variation>
    <location>
        <position position="124"/>
    </location>
</feature>
<feature type="mutagenesis site" description="In E; does not impair its ability to interact with CACYBP and degrade CTNNB1; when associated with A-151." evidence="14">
    <original>D</original>
    <variation>A</variation>
    <location>
        <position position="142"/>
    </location>
</feature>
<feature type="mutagenesis site" description="In E; does not impair its ability to interact with CACYBP and degrade CTNNB1; when associated with A-142." evidence="14">
    <original>Q</original>
    <variation>A</variation>
    <location>
        <position position="151"/>
    </location>
</feature>
<feature type="mutagenesis site" description="Abolishes ability to degrade DCC." evidence="33">
    <original>H</original>
    <variation>Y</variation>
    <location>
        <position position="152"/>
    </location>
</feature>
<feature type="mutagenesis site" description="In A; does not impair its ability to degrade PML while it abolishes its ability to interact with CACYBP and degrade CTNNB1; when associated with A-226 and A-237." evidence="14 18">
    <original>ED</original>
    <variation>AA</variation>
    <location>
        <begin position="161"/>
        <end position="162"/>
    </location>
</feature>
<feature type="mutagenesis site" description="Impairs CTNNB1 degradation." evidence="22">
    <original>KYD</original>
    <variation>GDG</variation>
    <location>
        <begin position="198"/>
        <end position="200"/>
    </location>
</feature>
<feature type="mutagenesis site" description="No effect." evidence="33">
    <original>H</original>
    <variation>Y</variation>
    <location>
        <position position="202"/>
    </location>
</feature>
<feature type="mutagenesis site" description="Abolishes ability to degrade DCC." evidence="33">
    <original>L</original>
    <variation>R</variation>
    <location>
        <position position="211"/>
    </location>
</feature>
<feature type="mutagenesis site" description="In D; does not impair its ability to interact with CACYBP and degrade CTNNB1 and PML; when associated with A-124; A-231 and A-232." evidence="14 18">
    <original>TR</original>
    <variation>AA</variation>
    <location>
        <begin position="214"/>
        <end position="215"/>
    </location>
</feature>
<feature type="mutagenesis site" description="In C; does not impair its ability to interact with CACYBP and degrade CTNNB1; when associated with A-233." evidence="14">
    <original>R</original>
    <variation>A</variation>
    <location>
        <position position="224"/>
    </location>
</feature>
<feature type="mutagenesis site" description="In A; does not impair its ability to degrade PML while it abolishes its ability to interact with CACYBP and degrade CTNNB1; when associated with A-161; A-162 and A-237." evidence="14 18">
    <original>E</original>
    <variation>A</variation>
    <location>
        <position position="226"/>
    </location>
</feature>
<feature type="mutagenesis site" description="In D; does not impair its ability to interact with CACYBP and degrade CTNNB1 and PML; when associated with A-124; A-214 and A-215." evidence="14 18">
    <original>RR</original>
    <variation>AA</variation>
    <location>
        <begin position="231"/>
        <end position="232"/>
    </location>
</feature>
<feature type="mutagenesis site" description="In C; does not impair its ability to interact with CACYBP and degrade CTNNB1; when associated with A-233." evidence="14">
    <original>R</original>
    <variation>A</variation>
    <location>
        <position position="233"/>
    </location>
</feature>
<feature type="mutagenesis site" description="In A; does not impair its ability to degrade PML while it abolishes its ability to interact with CACYBP and degrade CTNNB1; when associated with A-161; A-162 and A-226." evidence="14 18">
    <original>E</original>
    <variation>A</variation>
    <location>
        <position position="237"/>
    </location>
</feature>
<feature type="mutagenesis site" description="Impairs CTNNB1 degradation." evidence="22">
    <original>M</original>
    <variation>D</variation>
    <variation>K</variation>
    <location>
        <position position="252"/>
    </location>
</feature>
<feature type="mutagenesis site" description="In B; does not impair its ability to interact with CACYBP and degrade CTNNB1; when associated with A-265." evidence="14">
    <original>N</original>
    <variation>A</variation>
    <location>
        <position position="253"/>
    </location>
</feature>
<feature type="mutagenesis site" description="In B; does not impair its ability to interact with CACYBP and degrade CTNNB1; when associated with A-253." evidence="14">
    <original>Q</original>
    <variation>A</variation>
    <location>
        <position position="265"/>
    </location>
</feature>
<feature type="sequence conflict" description="In Ref. 5; CAE46191." evidence="37" ref="5">
    <original>P</original>
    <variation>S</variation>
    <location>
        <position position="173"/>
    </location>
</feature>
<feature type="sequence conflict" description="In Ref. 5; CAE46191." evidence="37" ref="5">
    <original>E</original>
    <variation>G</variation>
    <location>
        <position position="245"/>
    </location>
</feature>
<feature type="strand" evidence="42">
    <location>
        <begin position="95"/>
        <end position="97"/>
    </location>
</feature>
<feature type="helix" evidence="40">
    <location>
        <begin position="101"/>
        <end position="103"/>
    </location>
</feature>
<feature type="strand" evidence="42">
    <location>
        <begin position="108"/>
        <end position="110"/>
    </location>
</feature>
<feature type="helix" evidence="40">
    <location>
        <begin position="111"/>
        <end position="120"/>
    </location>
</feature>
<feature type="strand" evidence="41">
    <location>
        <begin position="122"/>
        <end position="124"/>
    </location>
</feature>
<feature type="strand" evidence="40">
    <location>
        <begin position="130"/>
        <end position="134"/>
    </location>
</feature>
<feature type="helix" evidence="40">
    <location>
        <begin position="141"/>
        <end position="143"/>
    </location>
</feature>
<feature type="helix" evidence="40">
    <location>
        <begin position="144"/>
        <end position="151"/>
    </location>
</feature>
<feature type="strand" evidence="40">
    <location>
        <begin position="156"/>
        <end position="167"/>
    </location>
</feature>
<feature type="strand" evidence="40">
    <location>
        <begin position="172"/>
        <end position="184"/>
    </location>
</feature>
<feature type="strand" evidence="40">
    <location>
        <begin position="187"/>
        <end position="197"/>
    </location>
</feature>
<feature type="strand" evidence="43">
    <location>
        <begin position="199"/>
        <end position="201"/>
    </location>
</feature>
<feature type="strand" evidence="40">
    <location>
        <begin position="203"/>
        <end position="213"/>
    </location>
</feature>
<feature type="helix" evidence="40">
    <location>
        <begin position="215"/>
        <end position="218"/>
    </location>
</feature>
<feature type="strand" evidence="40">
    <location>
        <begin position="221"/>
        <end position="229"/>
    </location>
</feature>
<feature type="strand" evidence="40">
    <location>
        <begin position="232"/>
        <end position="238"/>
    </location>
</feature>
<feature type="turn" evidence="40">
    <location>
        <begin position="243"/>
        <end position="245"/>
    </location>
</feature>
<feature type="helix" evidence="40">
    <location>
        <begin position="248"/>
        <end position="252"/>
    </location>
</feature>
<feature type="strand" evidence="40">
    <location>
        <begin position="256"/>
        <end position="260"/>
    </location>
</feature>
<feature type="helix" evidence="40">
    <location>
        <begin position="261"/>
        <end position="267"/>
    </location>
</feature>
<feature type="strand" evidence="40">
    <location>
        <begin position="272"/>
        <end position="281"/>
    </location>
</feature>
<accession>Q8IUQ4</accession>
<accession>A0FKF3</accession>
<accession>O43269</accession>
<accession>Q49A58</accession>
<accession>Q92880</accession>
<gene>
    <name type="primary">SIAH1</name>
    <name type="synonym">HUMSIAH</name>
</gene>
<dbReference type="EC" id="2.3.2.27" evidence="24 27"/>
<dbReference type="EMBL" id="U63295">
    <property type="protein sequence ID" value="AAC12950.1"/>
    <property type="molecule type" value="mRNA"/>
</dbReference>
<dbReference type="EMBL" id="U76247">
    <property type="protein sequence ID" value="AAC51907.1"/>
    <property type="molecule type" value="mRNA"/>
</dbReference>
<dbReference type="EMBL" id="AJ400626">
    <property type="protein sequence ID" value="CAC35542.1"/>
    <property type="molecule type" value="Genomic_DNA"/>
</dbReference>
<dbReference type="EMBL" id="EF026094">
    <property type="protein sequence ID" value="ABK15529.1"/>
    <property type="molecule type" value="mRNA"/>
</dbReference>
<dbReference type="EMBL" id="BX647064">
    <property type="protein sequence ID" value="CAE46191.1"/>
    <property type="molecule type" value="mRNA"/>
</dbReference>
<dbReference type="EMBL" id="BC035562">
    <property type="protein sequence ID" value="AAH35562.1"/>
    <property type="molecule type" value="mRNA"/>
</dbReference>
<dbReference type="EMBL" id="BC042550">
    <property type="protein sequence ID" value="AAH42550.1"/>
    <property type="molecule type" value="mRNA"/>
</dbReference>
<dbReference type="EMBL" id="BC044920">
    <property type="protein sequence ID" value="AAH44920.1"/>
    <property type="molecule type" value="mRNA"/>
</dbReference>
<dbReference type="CCDS" id="CCDS10735.1">
    <molecule id="Q8IUQ4-1"/>
</dbReference>
<dbReference type="CCDS" id="CCDS32444.1">
    <molecule id="Q8IUQ4-2"/>
</dbReference>
<dbReference type="RefSeq" id="NP_001006611.1">
    <molecule id="Q8IUQ4-2"/>
    <property type="nucleotide sequence ID" value="NM_001006610.2"/>
</dbReference>
<dbReference type="RefSeq" id="NP_003022.3">
    <molecule id="Q8IUQ4-1"/>
    <property type="nucleotide sequence ID" value="NM_003031.3"/>
</dbReference>
<dbReference type="RefSeq" id="XP_006721309.1">
    <molecule id="Q8IUQ4-1"/>
    <property type="nucleotide sequence ID" value="XM_006721246.3"/>
</dbReference>
<dbReference type="RefSeq" id="XP_011521581.1">
    <property type="nucleotide sequence ID" value="XM_011523279.1"/>
</dbReference>
<dbReference type="RefSeq" id="XP_024306163.1">
    <molecule id="Q8IUQ4-1"/>
    <property type="nucleotide sequence ID" value="XM_024450395.2"/>
</dbReference>
<dbReference type="RefSeq" id="XP_054169685.1">
    <molecule id="Q8IUQ4-1"/>
    <property type="nucleotide sequence ID" value="XM_054313710.1"/>
</dbReference>
<dbReference type="RefSeq" id="XP_054169686.1">
    <molecule id="Q8IUQ4-1"/>
    <property type="nucleotide sequence ID" value="XM_054313711.1"/>
</dbReference>
<dbReference type="PDB" id="2A25">
    <property type="method" value="X-ray"/>
    <property type="resolution" value="2.20 A"/>
    <property type="chains" value="A=90-282"/>
</dbReference>
<dbReference type="PDB" id="4C9Z">
    <property type="method" value="X-ray"/>
    <property type="resolution" value="1.95 A"/>
    <property type="chains" value="A/B=91-282"/>
</dbReference>
<dbReference type="PDB" id="4CA1">
    <property type="method" value="X-ray"/>
    <property type="resolution" value="1.58 A"/>
    <property type="chains" value="A/B=91-282"/>
</dbReference>
<dbReference type="PDB" id="4I7B">
    <property type="method" value="X-ray"/>
    <property type="resolution" value="3.00 A"/>
    <property type="chains" value="A/C=90-282"/>
</dbReference>
<dbReference type="PDB" id="4I7C">
    <property type="method" value="X-ray"/>
    <property type="resolution" value="2.80 A"/>
    <property type="chains" value="A/C=90-282"/>
</dbReference>
<dbReference type="PDB" id="4I7D">
    <property type="method" value="X-ray"/>
    <property type="resolution" value="2.40 A"/>
    <property type="chains" value="A/C=90-282"/>
</dbReference>
<dbReference type="PDB" id="4X3G">
    <property type="method" value="X-ray"/>
    <property type="resolution" value="2.34 A"/>
    <property type="chains" value="A/B=91-282"/>
</dbReference>
<dbReference type="PDB" id="5WZZ">
    <property type="method" value="X-ray"/>
    <property type="resolution" value="2.10 A"/>
    <property type="chains" value="A/B/C/D=93-282"/>
</dbReference>
<dbReference type="PDB" id="8HEO">
    <property type="method" value="X-ray"/>
    <property type="resolution" value="2.53 A"/>
    <property type="chains" value="A/B=89-282"/>
</dbReference>
<dbReference type="PDB" id="9G0L">
    <property type="method" value="X-ray"/>
    <property type="resolution" value="1.90 A"/>
    <property type="chains" value="A=28-125"/>
</dbReference>
<dbReference type="PDBsum" id="2A25"/>
<dbReference type="PDBsum" id="4C9Z"/>
<dbReference type="PDBsum" id="4CA1"/>
<dbReference type="PDBsum" id="4I7B"/>
<dbReference type="PDBsum" id="4I7C"/>
<dbReference type="PDBsum" id="4I7D"/>
<dbReference type="PDBsum" id="4X3G"/>
<dbReference type="PDBsum" id="5WZZ"/>
<dbReference type="PDBsum" id="8HEO"/>
<dbReference type="PDBsum" id="9G0L"/>
<dbReference type="SMR" id="Q8IUQ4"/>
<dbReference type="BioGRID" id="112372">
    <property type="interactions" value="233"/>
</dbReference>
<dbReference type="CORUM" id="Q8IUQ4"/>
<dbReference type="DIP" id="DIP-35684N"/>
<dbReference type="FunCoup" id="Q8IUQ4">
    <property type="interactions" value="3423"/>
</dbReference>
<dbReference type="IntAct" id="Q8IUQ4">
    <property type="interactions" value="158"/>
</dbReference>
<dbReference type="MINT" id="Q8IUQ4"/>
<dbReference type="STRING" id="9606.ENSP00000349156"/>
<dbReference type="MoonDB" id="Q8IUQ4">
    <property type="type" value="Predicted"/>
</dbReference>
<dbReference type="TCDB" id="8.A.133.1.1">
    <property type="family name" value="the siah1 e3 ubiquitin-protein ligase (siah1) family"/>
</dbReference>
<dbReference type="GlyGen" id="Q8IUQ4">
    <property type="glycosylation" value="2 sites, 1 O-linked glycan (2 sites)"/>
</dbReference>
<dbReference type="iPTMnet" id="Q8IUQ4"/>
<dbReference type="PhosphoSitePlus" id="Q8IUQ4"/>
<dbReference type="BioMuta" id="SIAH1"/>
<dbReference type="DMDM" id="46577493"/>
<dbReference type="jPOST" id="Q8IUQ4"/>
<dbReference type="MassIVE" id="Q8IUQ4"/>
<dbReference type="PaxDb" id="9606-ENSP00000349156"/>
<dbReference type="PeptideAtlas" id="Q8IUQ4"/>
<dbReference type="ProteomicsDB" id="70593">
    <molecule id="Q8IUQ4-1"/>
</dbReference>
<dbReference type="ProteomicsDB" id="70594">
    <molecule id="Q8IUQ4-2"/>
</dbReference>
<dbReference type="ProteomicsDB" id="70595">
    <molecule id="Q8IUQ4-3"/>
</dbReference>
<dbReference type="Pumba" id="Q8IUQ4"/>
<dbReference type="Antibodypedia" id="14482">
    <property type="antibodies" value="409 antibodies from 35 providers"/>
</dbReference>
<dbReference type="DNASU" id="6477"/>
<dbReference type="Ensembl" id="ENST00000356721.3">
    <molecule id="Q8IUQ4-2"/>
    <property type="protein sequence ID" value="ENSP00000349156.3"/>
    <property type="gene ID" value="ENSG00000196470.12"/>
</dbReference>
<dbReference type="Ensembl" id="ENST00000380006.2">
    <molecule id="Q8IUQ4-1"/>
    <property type="protein sequence ID" value="ENSP00000369343.2"/>
    <property type="gene ID" value="ENSG00000196470.12"/>
</dbReference>
<dbReference type="Ensembl" id="ENST00000394725.3">
    <molecule id="Q8IUQ4-1"/>
    <property type="protein sequence ID" value="ENSP00000378214.2"/>
    <property type="gene ID" value="ENSG00000196470.12"/>
</dbReference>
<dbReference type="Ensembl" id="ENST00000568007.5">
    <molecule id="Q8IUQ4-1"/>
    <property type="protein sequence ID" value="ENSP00000456421.1"/>
    <property type="gene ID" value="ENSG00000196470.12"/>
</dbReference>
<dbReference type="GeneID" id="6477"/>
<dbReference type="KEGG" id="hsa:6477"/>
<dbReference type="MANE-Select" id="ENST00000394725.3">
    <property type="protein sequence ID" value="ENSP00000378214.2"/>
    <property type="RefSeq nucleotide sequence ID" value="NM_003031.4"/>
    <property type="RefSeq protein sequence ID" value="NP_003022.3"/>
</dbReference>
<dbReference type="UCSC" id="uc002efl.4">
    <molecule id="Q8IUQ4-1"/>
    <property type="organism name" value="human"/>
</dbReference>
<dbReference type="AGR" id="HGNC:10857"/>
<dbReference type="CTD" id="6477"/>
<dbReference type="DisGeNET" id="6477"/>
<dbReference type="GeneCards" id="SIAH1"/>
<dbReference type="HGNC" id="HGNC:10857">
    <property type="gene designation" value="SIAH1"/>
</dbReference>
<dbReference type="HPA" id="ENSG00000196470">
    <property type="expression patterns" value="Low tissue specificity"/>
</dbReference>
<dbReference type="MalaCards" id="SIAH1"/>
<dbReference type="MIM" id="602212">
    <property type="type" value="gene"/>
</dbReference>
<dbReference type="MIM" id="619314">
    <property type="type" value="phenotype"/>
</dbReference>
<dbReference type="neXtProt" id="NX_Q8IUQ4"/>
<dbReference type="OpenTargets" id="ENSG00000196470"/>
<dbReference type="Orphanet" id="528084">
    <property type="disease" value="Non-specific syndromic intellectual disability"/>
</dbReference>
<dbReference type="PharmGKB" id="PA35759"/>
<dbReference type="VEuPathDB" id="HostDB:ENSG00000196470"/>
<dbReference type="eggNOG" id="KOG3002">
    <property type="taxonomic scope" value="Eukaryota"/>
</dbReference>
<dbReference type="GeneTree" id="ENSGT00940000154837"/>
<dbReference type="HOGENOM" id="CLU_028215_0_0_1"/>
<dbReference type="InParanoid" id="Q8IUQ4"/>
<dbReference type="OMA" id="HSNTGCT"/>
<dbReference type="OrthoDB" id="941555at2759"/>
<dbReference type="PAN-GO" id="Q8IUQ4">
    <property type="GO annotations" value="4 GO annotations based on evolutionary models"/>
</dbReference>
<dbReference type="PhylomeDB" id="Q8IUQ4"/>
<dbReference type="TreeFam" id="TF312976"/>
<dbReference type="PathwayCommons" id="Q8IUQ4"/>
<dbReference type="Reactome" id="R-HSA-373752">
    <property type="pathway name" value="Netrin-1 signaling"/>
</dbReference>
<dbReference type="Reactome" id="R-HSA-977225">
    <property type="pathway name" value="Amyloid fiber formation"/>
</dbReference>
<dbReference type="Reactome" id="R-HSA-983168">
    <property type="pathway name" value="Antigen processing: Ubiquitination &amp; Proteasome degradation"/>
</dbReference>
<dbReference type="SignaLink" id="Q8IUQ4"/>
<dbReference type="SIGNOR" id="Q8IUQ4"/>
<dbReference type="UniPathway" id="UPA00143"/>
<dbReference type="BioGRID-ORCS" id="6477">
    <property type="hits" value="38 hits in 1224 CRISPR screens"/>
</dbReference>
<dbReference type="ChiTaRS" id="SIAH1">
    <property type="organism name" value="human"/>
</dbReference>
<dbReference type="EvolutionaryTrace" id="Q8IUQ4"/>
<dbReference type="GeneWiki" id="SIAH1"/>
<dbReference type="GenomeRNAi" id="6477"/>
<dbReference type="Pharos" id="Q8IUQ4">
    <property type="development level" value="Tbio"/>
</dbReference>
<dbReference type="PRO" id="PR:Q8IUQ4"/>
<dbReference type="Proteomes" id="UP000005640">
    <property type="component" value="Chromosome 16"/>
</dbReference>
<dbReference type="RNAct" id="Q8IUQ4">
    <property type="molecule type" value="protein"/>
</dbReference>
<dbReference type="Bgee" id="ENSG00000196470">
    <property type="expression patterns" value="Expressed in secondary oocyte and 204 other cell types or tissues"/>
</dbReference>
<dbReference type="ExpressionAtlas" id="Q8IUQ4">
    <property type="expression patterns" value="baseline and differential"/>
</dbReference>
<dbReference type="GO" id="GO:0030877">
    <property type="term" value="C:beta-catenin destruction complex"/>
    <property type="evidence" value="ECO:0000314"/>
    <property type="project" value="UniProtKB"/>
</dbReference>
<dbReference type="GO" id="GO:0005737">
    <property type="term" value="C:cytoplasm"/>
    <property type="evidence" value="ECO:0000318"/>
    <property type="project" value="GO_Central"/>
</dbReference>
<dbReference type="GO" id="GO:0005829">
    <property type="term" value="C:cytosol"/>
    <property type="evidence" value="ECO:0000304"/>
    <property type="project" value="Reactome"/>
</dbReference>
<dbReference type="GO" id="GO:0005769">
    <property type="term" value="C:early endosome"/>
    <property type="evidence" value="ECO:0007669"/>
    <property type="project" value="Ensembl"/>
</dbReference>
<dbReference type="GO" id="GO:0005634">
    <property type="term" value="C:nucleus"/>
    <property type="evidence" value="ECO:0000250"/>
    <property type="project" value="UniProtKB"/>
</dbReference>
<dbReference type="GO" id="GO:0042802">
    <property type="term" value="F:identical protein binding"/>
    <property type="evidence" value="ECO:0000353"/>
    <property type="project" value="IntAct"/>
</dbReference>
<dbReference type="GO" id="GO:0031624">
    <property type="term" value="F:ubiquitin conjugating enzyme binding"/>
    <property type="evidence" value="ECO:0000318"/>
    <property type="project" value="GO_Central"/>
</dbReference>
<dbReference type="GO" id="GO:0061630">
    <property type="term" value="F:ubiquitin protein ligase activity"/>
    <property type="evidence" value="ECO:0000314"/>
    <property type="project" value="MGI"/>
</dbReference>
<dbReference type="GO" id="GO:0004842">
    <property type="term" value="F:ubiquitin-protein transferase activity"/>
    <property type="evidence" value="ECO:0000315"/>
    <property type="project" value="UniProtKB"/>
</dbReference>
<dbReference type="GO" id="GO:0008270">
    <property type="term" value="F:zinc ion binding"/>
    <property type="evidence" value="ECO:0000314"/>
    <property type="project" value="UniProtKB"/>
</dbReference>
<dbReference type="GO" id="GO:1990000">
    <property type="term" value="P:amyloid fibril formation"/>
    <property type="evidence" value="ECO:0000304"/>
    <property type="project" value="Reactome"/>
</dbReference>
<dbReference type="GO" id="GO:0009653">
    <property type="term" value="P:anatomical structure morphogenesis"/>
    <property type="evidence" value="ECO:0000304"/>
    <property type="project" value="ProtInc"/>
</dbReference>
<dbReference type="GO" id="GO:0006915">
    <property type="term" value="P:apoptotic process"/>
    <property type="evidence" value="ECO:0000304"/>
    <property type="project" value="ProtInc"/>
</dbReference>
<dbReference type="GO" id="GO:0007411">
    <property type="term" value="P:axon guidance"/>
    <property type="evidence" value="ECO:0000304"/>
    <property type="project" value="ProtInc"/>
</dbReference>
<dbReference type="GO" id="GO:0060070">
    <property type="term" value="P:canonical Wnt signaling pathway"/>
    <property type="evidence" value="ECO:0000315"/>
    <property type="project" value="UniProtKB"/>
</dbReference>
<dbReference type="GO" id="GO:0007399">
    <property type="term" value="P:nervous system development"/>
    <property type="evidence" value="ECO:0000304"/>
    <property type="project" value="ProtInc"/>
</dbReference>
<dbReference type="GO" id="GO:0051402">
    <property type="term" value="P:neuron apoptotic process"/>
    <property type="evidence" value="ECO:0000250"/>
    <property type="project" value="UniProtKB"/>
</dbReference>
<dbReference type="GO" id="GO:0043065">
    <property type="term" value="P:positive regulation of apoptotic process"/>
    <property type="evidence" value="ECO:0000314"/>
    <property type="project" value="UniProtKB"/>
</dbReference>
<dbReference type="GO" id="GO:2001244">
    <property type="term" value="P:positive regulation of intrinsic apoptotic signaling pathway"/>
    <property type="evidence" value="ECO:0000315"/>
    <property type="project" value="UniProtKB"/>
</dbReference>
<dbReference type="GO" id="GO:0043161">
    <property type="term" value="P:proteasome-mediated ubiquitin-dependent protein catabolic process"/>
    <property type="evidence" value="ECO:0000314"/>
    <property type="project" value="UniProtKB"/>
</dbReference>
<dbReference type="GO" id="GO:0030163">
    <property type="term" value="P:protein catabolic process"/>
    <property type="evidence" value="ECO:0000314"/>
    <property type="project" value="UniProtKB"/>
</dbReference>
<dbReference type="GO" id="GO:0031648">
    <property type="term" value="P:protein destabilization"/>
    <property type="evidence" value="ECO:0007669"/>
    <property type="project" value="Ensembl"/>
</dbReference>
<dbReference type="GO" id="GO:0016567">
    <property type="term" value="P:protein ubiquitination"/>
    <property type="evidence" value="ECO:0007669"/>
    <property type="project" value="UniProtKB-UniPathway"/>
</dbReference>
<dbReference type="GO" id="GO:0007283">
    <property type="term" value="P:spermatogenesis"/>
    <property type="evidence" value="ECO:0007669"/>
    <property type="project" value="UniProtKB-KW"/>
</dbReference>
<dbReference type="GO" id="GO:0006511">
    <property type="term" value="P:ubiquitin-dependent protein catabolic process"/>
    <property type="evidence" value="ECO:0000314"/>
    <property type="project" value="MGI"/>
</dbReference>
<dbReference type="CDD" id="cd03829">
    <property type="entry name" value="Sina"/>
    <property type="match status" value="1"/>
</dbReference>
<dbReference type="DisProt" id="DP02608"/>
<dbReference type="FunFam" id="2.60.210.10:FF:000002">
    <property type="entry name" value="E3 ubiquitin-protein ligase"/>
    <property type="match status" value="1"/>
</dbReference>
<dbReference type="FunFam" id="3.30.160.60:FF:000665">
    <property type="entry name" value="E3 ubiquitin-protein ligase"/>
    <property type="match status" value="1"/>
</dbReference>
<dbReference type="FunFam" id="3.30.40.10:FF:000050">
    <property type="entry name" value="E3 ubiquitin-protein ligase"/>
    <property type="match status" value="1"/>
</dbReference>
<dbReference type="FunFam" id="3.30.40.10:FF:000063">
    <property type="entry name" value="E3 ubiquitin-protein ligase"/>
    <property type="match status" value="1"/>
</dbReference>
<dbReference type="Gene3D" id="2.60.210.10">
    <property type="entry name" value="Apoptosis, Tumor Necrosis Factor Receptor Associated Protein 2, Chain A"/>
    <property type="match status" value="1"/>
</dbReference>
<dbReference type="Gene3D" id="3.30.40.10">
    <property type="entry name" value="Zinc/RING finger domain, C3HC4 (zinc finger)"/>
    <property type="match status" value="2"/>
</dbReference>
<dbReference type="IDEAL" id="IID00120"/>
<dbReference type="InterPro" id="IPR018121">
    <property type="entry name" value="7-in-absentia-prot_TRAF-dom"/>
</dbReference>
<dbReference type="InterPro" id="IPR004162">
    <property type="entry name" value="SINA-like_animal"/>
</dbReference>
<dbReference type="InterPro" id="IPR049548">
    <property type="entry name" value="Sina-like_RING"/>
</dbReference>
<dbReference type="InterPro" id="IPR008974">
    <property type="entry name" value="TRAF-like"/>
</dbReference>
<dbReference type="InterPro" id="IPR001841">
    <property type="entry name" value="Znf_RING"/>
</dbReference>
<dbReference type="InterPro" id="IPR013083">
    <property type="entry name" value="Znf_RING/FYVE/PHD"/>
</dbReference>
<dbReference type="InterPro" id="IPR013010">
    <property type="entry name" value="Znf_SIAH"/>
</dbReference>
<dbReference type="PANTHER" id="PTHR45877:SF7">
    <property type="entry name" value="E3 UBIQUITIN-PROTEIN LIGASE SIAH1"/>
    <property type="match status" value="1"/>
</dbReference>
<dbReference type="PANTHER" id="PTHR45877">
    <property type="entry name" value="E3 UBIQUITIN-PROTEIN LIGASE SIAH2"/>
    <property type="match status" value="1"/>
</dbReference>
<dbReference type="Pfam" id="PF21362">
    <property type="entry name" value="Sina_RING"/>
    <property type="match status" value="1"/>
</dbReference>
<dbReference type="Pfam" id="PF03145">
    <property type="entry name" value="Sina_TRAF"/>
    <property type="match status" value="1"/>
</dbReference>
<dbReference type="Pfam" id="PF21361">
    <property type="entry name" value="Sina_ZnF"/>
    <property type="match status" value="1"/>
</dbReference>
<dbReference type="SUPFAM" id="SSF57850">
    <property type="entry name" value="RING/U-box"/>
    <property type="match status" value="1"/>
</dbReference>
<dbReference type="SUPFAM" id="SSF49599">
    <property type="entry name" value="TRAF domain-like"/>
    <property type="match status" value="1"/>
</dbReference>
<dbReference type="PROSITE" id="PS50089">
    <property type="entry name" value="ZF_RING_2"/>
    <property type="match status" value="1"/>
</dbReference>
<dbReference type="PROSITE" id="PS51081">
    <property type="entry name" value="ZF_SIAH"/>
    <property type="match status" value="1"/>
</dbReference>
<sequence>MSRQTATALPTGTSKCPPSQRVPALTGTTASNNDLASLFECPVCFDYVLPPILQCQSGHLVCSNCRPKLTCCPTCRGPLGSIRNLAMEKVANSVLFPCKYASSGCEITLPHTEKADHEELCEFRPYSCPCPGASCKWQGSLDAVMPHLMHQHKSITTLQGEDIVFLATDINLPGAVDWVMMQSCFGFHFMLVLEKQEKYDGHQQFFAIVQLIGTRKQAENFAYRLELNGHRRRLTWEATPRSIHEGIATAIMNSDCLVFDTSIAQLFAENGNLGINVTISMC</sequence>
<proteinExistence type="evidence at protein level"/>
<organism>
    <name type="scientific">Homo sapiens</name>
    <name type="common">Human</name>
    <dbReference type="NCBI Taxonomy" id="9606"/>
    <lineage>
        <taxon>Eukaryota</taxon>
        <taxon>Metazoa</taxon>
        <taxon>Chordata</taxon>
        <taxon>Craniata</taxon>
        <taxon>Vertebrata</taxon>
        <taxon>Euteleostomi</taxon>
        <taxon>Mammalia</taxon>
        <taxon>Eutheria</taxon>
        <taxon>Euarchontoglires</taxon>
        <taxon>Primates</taxon>
        <taxon>Haplorrhini</taxon>
        <taxon>Catarrhini</taxon>
        <taxon>Hominidae</taxon>
        <taxon>Homo</taxon>
    </lineage>
</organism>
<name>SIAH1_HUMAN</name>
<keyword id="KW-0002">3D-structure</keyword>
<keyword id="KW-0025">Alternative splicing</keyword>
<keyword id="KW-0053">Apoptosis</keyword>
<keyword id="KW-0131">Cell cycle</keyword>
<keyword id="KW-0963">Cytoplasm</keyword>
<keyword id="KW-0217">Developmental protein</keyword>
<keyword id="KW-0221">Differentiation</keyword>
<keyword id="KW-0225">Disease variant</keyword>
<keyword id="KW-0991">Intellectual disability</keyword>
<keyword id="KW-0479">Metal-binding</keyword>
<keyword id="KW-0539">Nucleus</keyword>
<keyword id="KW-0597">Phosphoprotein</keyword>
<keyword id="KW-1267">Proteomics identification</keyword>
<keyword id="KW-1185">Reference proteome</keyword>
<keyword id="KW-0744">Spermatogenesis</keyword>
<keyword id="KW-0808">Transferase</keyword>
<keyword id="KW-0833">Ubl conjugation pathway</keyword>
<keyword id="KW-0862">Zinc</keyword>
<keyword id="KW-0863">Zinc-finger</keyword>
<protein>
    <recommendedName>
        <fullName>E3 ubiquitin-protein ligase SIAH1</fullName>
        <ecNumber evidence="24 27">2.3.2.27</ecNumber>
    </recommendedName>
    <alternativeName>
        <fullName evidence="37">RING-type E3 ubiquitin transferase SIAH1</fullName>
    </alternativeName>
    <alternativeName>
        <fullName>Seven in absentia homolog 1</fullName>
        <shortName>Siah-1</shortName>
    </alternativeName>
    <alternativeName>
        <fullName>Siah-1a</fullName>
    </alternativeName>
</protein>
<comment type="function">
    <text evidence="1 2 6 7 8 9 10 11 12 13 17 18 19 20 22 23 24 25 26 27 28 30 33">E3 ubiquitin-protein ligase that mediates ubiquitination and subsequent proteasomal degradation of target proteins (PubMed:14506261, PubMed:14645235, PubMed:14654780, PubMed:15064394, PubMed:16085652, PubMed:19224863, PubMed:20508617, PubMed:22483617, PubMed:28546513, PubMed:32430360, PubMed:33591310, PubMed:9334332, PubMed:9858595). E3 ubiquitin ligases accept ubiquitin from an E2 ubiquitin-conjugating enzyme in the form of a thioester and then directly transfers the ubiquitin to targeted substrates (PubMed:14506261, PubMed:14645235, PubMed:14654780, PubMed:15064394, PubMed:16085652, PubMed:19224863, PubMed:20508617, PubMed:22483617, PubMed:9334332, PubMed:9858595). Mediates E3 ubiquitin ligase activity either through direct binding to substrates or by functioning as the essential RING domain subunit of larger E3 complexes (PubMed:14506261, PubMed:14645235, PubMed:14654780, PubMed:15064394, PubMed:16085652, PubMed:19224863, PubMed:20508617, PubMed:22483617, PubMed:9334332, PubMed:9858595). Triggers the ubiquitin-mediated degradation of many substrates, including proteins involved in transcription regulation (ELL2, MYB, POU2AF1, PML and RBBP8), a cell surface receptor (DCC), the cell-surface receptor-type tyrosine kinase FLT3, the cytoplasmic signal transduction molecules (KLF10/TIEG1 and NUMB), an antiapoptotic protein (BAG1), a microtubule motor protein (KIF22), a protein involved in synaptic vesicle function in neurons (SYP), a structural protein (CTNNB1) and SNCAIP (PubMed:10747903, PubMed:11146551, PubMed:11389839, PubMed:11389840, PubMed:11483517, PubMed:11483518, PubMed:11752454, PubMed:12072443). Confers constitutive instability to HIPK2 through proteasomal degradation (PubMed:18536714, PubMed:33591310). It is thereby involved in many cellular processes such as apoptosis, tumor suppression, cell cycle, axon guidance, transcription regulation, spermatogenesis and TNF-alpha signaling (PubMed:14506261, PubMed:14645235, PubMed:14654780, PubMed:15064394, PubMed:16085652, PubMed:19224863, PubMed:20508617, PubMed:22483617, PubMed:9334332, PubMed:9858595). Has some overlapping function with SIAH2 (PubMed:14506261, PubMed:14645235, PubMed:14654780, PubMed:15064394, PubMed:16085652, PubMed:19224863, PubMed:20508617, PubMed:22483617, PubMed:9334332, PubMed:9858595). Induces apoptosis in cooperation with PEG3 (By similarity). Upon nitric oxid (NO) generation that follows apoptotic stimulation, interacts with S-nitrosylated GAPDH, mediating the translocation of GAPDH to the nucleus (By similarity). GAPDH acts as a stabilizer of SIAH1, facilitating the degradation of nuclear proteins (By similarity). Mediates ubiquitination and degradation of EGLN2 and EGLN3 in response to the unfolded protein response (UPR), leading to their degradation and subsequent stabilization of ATF4 (By similarity). Also part of the Wnt signaling pathway in which it mediates the Wnt-induced ubiquitin-mediated proteasomal degradation of AXIN1 (PubMed:28546513, PubMed:32430360).</text>
</comment>
<comment type="catalytic activity">
    <reaction evidence="24 27">
        <text>S-ubiquitinyl-[E2 ubiquitin-conjugating enzyme]-L-cysteine + [acceptor protein]-L-lysine = [E2 ubiquitin-conjugating enzyme]-L-cysteine + N(6)-ubiquitinyl-[acceptor protein]-L-lysine.</text>
        <dbReference type="EC" id="2.3.2.27"/>
    </reaction>
</comment>
<comment type="activity regulation">
    <text evidence="24">Inhibited by interaction with SNCAIP (isoform 2, but not isoform 1). May be inhibited by interaction with PEG10.</text>
</comment>
<comment type="pathway">
    <text evidence="24 27">Protein modification; protein ubiquitination.</text>
</comment>
<comment type="subunit">
    <text evidence="1 2 7 8 14 16 20 21 22 23 24 29 30 32">Homodimer. Interacts with group 1 glutamate receptors GRM1 and GRM5. Interacts with DAB1, which may inhibit its activity. Interacts with UBE2E2. Interacts with PEG3. Interacts with GAPDH; leading to stabilize SIAH1 (By similarity). Component of some large E3 complex composed of UBE2D1, SIAH1, CACYBP/SIP, SKP1, APC and TBL1X. Interacts with UBE2I. Interacts with alpha-tubulin. Interacts with PEG10, which may inhibit its activity. Interacts with KHDRBS3. Interacts with SNCAIP. Interacts with HIPK2; the interaction is promoted by DAZAP2 and results in SIAH1-mediated ubiquitination and subsequent proteasomal degradation of HIPK2 (PubMed:33591310). Interacts with DAZAP2; the interaction is decreased following phosphorylation of DAZAP2 by HIPK2 (PubMed:33591310). Interacts with Bassoon/BSN and Piccolo/PLCO; these interactions negatively regulate SIAH1 E3 ligase activity (By similarity). Interacts with DCC (PubMed:9334332). Interacts with AXIN1; catalyzes AXIN1 ubiquitination and subsequent proteasome-mediated ubiquitin-dependent degradation (PubMed:28546513).</text>
</comment>
<comment type="interaction">
    <interactant intactId="EBI-747107">
        <id>Q8IUQ4</id>
    </interactant>
    <interactant intactId="EBI-740884">
        <id>Q9NRN7</id>
        <label>AASDHPPT</label>
    </interactant>
    <organismsDiffer>false</organismsDiffer>
    <experiments>3</experiments>
</comment>
<comment type="interaction">
    <interactant intactId="EBI-747107">
        <id>Q8IUQ4</id>
    </interactant>
    <interactant intactId="EBI-395282">
        <id>Q9UHB7</id>
        <label>AFF4</label>
    </interactant>
    <organismsDiffer>false</organismsDiffer>
    <experiments>5</experiments>
</comment>
<comment type="interaction">
    <interactant intactId="EBI-747107">
        <id>Q8IUQ4</id>
    </interactant>
    <interactant intactId="EBI-10261324">
        <id>Q9UHB7-2</id>
        <label>AFF4</label>
    </interactant>
    <organismsDiffer>false</organismsDiffer>
    <experiments>5</experiments>
</comment>
<comment type="interaction">
    <interactant intactId="EBI-747107">
        <id>Q8IUQ4</id>
    </interactant>
    <interactant intactId="EBI-745213">
        <id>P29972</id>
        <label>AQP1</label>
    </interactant>
    <organismsDiffer>false</organismsDiffer>
    <experiments>3</experiments>
</comment>
<comment type="interaction">
    <interactant intactId="EBI-747107">
        <id>Q8IUQ4</id>
    </interactant>
    <interactant intactId="EBI-10256990">
        <id>Q7Z3E5-2</id>
        <label>ARMC9</label>
    </interactant>
    <organismsDiffer>false</organismsDiffer>
    <experiments>3</experiments>
</comment>
<comment type="interaction">
    <interactant intactId="EBI-747107">
        <id>Q8IUQ4</id>
    </interactant>
    <interactant intactId="EBI-708350">
        <id>O15265</id>
        <label>ATXN7</label>
    </interactant>
    <organismsDiffer>false</organismsDiffer>
    <experiments>2</experiments>
</comment>
<comment type="interaction">
    <interactant intactId="EBI-747107">
        <id>Q8IUQ4</id>
    </interactant>
    <interactant intactId="EBI-765407">
        <id>P41182</id>
        <label>BCL6</label>
    </interactant>
    <organismsDiffer>false</organismsDiffer>
    <experiments>3</experiments>
</comment>
<comment type="interaction">
    <interactant intactId="EBI-747107">
        <id>Q8IUQ4</id>
    </interactant>
    <interactant intactId="EBI-4291044">
        <id>P40121</id>
        <label>CAPG</label>
    </interactant>
    <organismsDiffer>false</organismsDiffer>
    <experiments>3</experiments>
</comment>
<comment type="interaction">
    <interactant intactId="EBI-747107">
        <id>Q8IUQ4</id>
    </interactant>
    <interactant intactId="EBI-10238351">
        <id>Q9NVL8</id>
        <label>CCDC198</label>
    </interactant>
    <organismsDiffer>false</organismsDiffer>
    <experiments>3</experiments>
</comment>
<comment type="interaction">
    <interactant intactId="EBI-747107">
        <id>Q8IUQ4</id>
    </interactant>
    <interactant intactId="EBI-396137">
        <id>Q9UJX2</id>
        <label>CDC23</label>
    </interactant>
    <organismsDiffer>false</organismsDiffer>
    <experiments>3</experiments>
</comment>
<comment type="interaction">
    <interactant intactId="EBI-747107">
        <id>Q8IUQ4</id>
    </interactant>
    <interactant intactId="EBI-975634">
        <id>P49427</id>
        <label>CDC34</label>
    </interactant>
    <organismsDiffer>false</organismsDiffer>
    <experiments>3</experiments>
</comment>
<comment type="interaction">
    <interactant intactId="EBI-747107">
        <id>Q8IUQ4</id>
    </interactant>
    <interactant intactId="EBI-10266998">
        <id>Q8N619</id>
        <label>CDK5R1</label>
    </interactant>
    <organismsDiffer>false</organismsDiffer>
    <experiments>3</experiments>
</comment>
<comment type="interaction">
    <interactant intactId="EBI-747107">
        <id>Q8IUQ4</id>
    </interactant>
    <interactant intactId="EBI-10271838">
        <id>Q8TAM4</id>
        <label>CDK5R1</label>
    </interactant>
    <organismsDiffer>false</organismsDiffer>
    <experiments>3</experiments>
</comment>
<comment type="interaction">
    <interactant intactId="EBI-747107">
        <id>Q8IUQ4</id>
    </interactant>
    <interactant intactId="EBI-1046350">
        <id>Q9UJV9</id>
        <label>DDX41</label>
    </interactant>
    <organismsDiffer>false</organismsDiffer>
    <experiments>3</experiments>
</comment>
<comment type="interaction">
    <interactant intactId="EBI-747107">
        <id>Q8IUQ4</id>
    </interactant>
    <interactant intactId="EBI-10329228">
        <id>Q9Y5T4</id>
        <label>DNAJC15</label>
    </interactant>
    <organismsDiffer>false</organismsDiffer>
    <experiments>3</experiments>
</comment>
<comment type="interaction">
    <interactant intactId="EBI-747107">
        <id>Q8IUQ4</id>
    </interactant>
    <interactant intactId="EBI-395638">
        <id>O14645</id>
        <label>DNALI1</label>
    </interactant>
    <organismsDiffer>false</organismsDiffer>
    <experiments>3</experiments>
</comment>
<comment type="interaction">
    <interactant intactId="EBI-747107">
        <id>Q8IUQ4</id>
    </interactant>
    <interactant intactId="EBI-358607">
        <id>P29692</id>
        <label>EEF1D</label>
    </interactant>
    <organismsDiffer>false</organismsDiffer>
    <experiments>4</experiments>
</comment>
<comment type="interaction">
    <interactant intactId="EBI-747107">
        <id>Q8IUQ4</id>
    </interactant>
    <interactant intactId="EBI-749333">
        <id>Q8N2X6</id>
        <label>EXOC3-AS1</label>
    </interactant>
    <organismsDiffer>false</organismsDiffer>
    <experiments>3</experiments>
</comment>
<comment type="interaction">
    <interactant intactId="EBI-747107">
        <id>Q8IUQ4</id>
    </interactant>
    <interactant intactId="EBI-6658203">
        <id>Q86YD7</id>
        <label>FAM90A1</label>
    </interactant>
    <organismsDiffer>false</organismsDiffer>
    <experiments>3</experiments>
</comment>
<comment type="interaction">
    <interactant intactId="EBI-747107">
        <id>Q8IUQ4</id>
    </interactant>
    <interactant intactId="EBI-2271018">
        <id>Q01543</id>
        <label>FLI1</label>
    </interactant>
    <organismsDiffer>false</organismsDiffer>
    <experiments>3</experiments>
</comment>
<comment type="interaction">
    <interactant intactId="EBI-747107">
        <id>Q8IUQ4</id>
    </interactant>
    <interactant intactId="EBI-741016">
        <id>Q8TAN2</id>
        <label>FZD9</label>
    </interactant>
    <organismsDiffer>false</organismsDiffer>
    <experiments>3</experiments>
</comment>
<comment type="interaction">
    <interactant intactId="EBI-747107">
        <id>Q8IUQ4</id>
    </interactant>
    <interactant intactId="EBI-2833203">
        <id>Q8WTR4</id>
        <label>GDPD5</label>
    </interactant>
    <organismsDiffer>false</organismsDiffer>
    <experiments>3</experiments>
</comment>
<comment type="interaction">
    <interactant intactId="EBI-747107">
        <id>Q8IUQ4</id>
    </interactant>
    <interactant intactId="EBI-302023">
        <id>P62805</id>
        <label>H4C9</label>
    </interactant>
    <organismsDiffer>false</organismsDiffer>
    <experiments>3</experiments>
</comment>
<comment type="interaction">
    <interactant intactId="EBI-747107">
        <id>Q8IUQ4</id>
    </interactant>
    <interactant intactId="EBI-10194422">
        <id>P05111</id>
        <label>INHA</label>
    </interactant>
    <organismsDiffer>false</organismsDiffer>
    <experiments>3</experiments>
</comment>
<comment type="interaction">
    <interactant intactId="EBI-747107">
        <id>Q8IUQ4</id>
    </interactant>
    <interactant intactId="EBI-745878">
        <id>Q9H0B3</id>
        <label>IQCN</label>
    </interactant>
    <organismsDiffer>false</organismsDiffer>
    <experiments>3</experiments>
</comment>
<comment type="interaction">
    <interactant intactId="EBI-747107">
        <id>Q8IUQ4</id>
    </interactant>
    <interactant intactId="EBI-743591">
        <id>Q9BW62</id>
        <label>KATNAL1</label>
    </interactant>
    <organismsDiffer>false</organismsDiffer>
    <experiments>3</experiments>
</comment>
<comment type="interaction">
    <interactant intactId="EBI-747107">
        <id>Q8IUQ4</id>
    </interactant>
    <interactant intactId="EBI-9117877">
        <id>P78508</id>
        <label>KCNJ10</label>
    </interactant>
    <organismsDiffer>false</organismsDiffer>
    <experiments>3</experiments>
</comment>
<comment type="interaction">
    <interactant intactId="EBI-747107">
        <id>Q8IUQ4</id>
    </interactant>
    <interactant intactId="EBI-5240269">
        <id>Q8IZA0</id>
        <label>KIAA0319L</label>
    </interactant>
    <organismsDiffer>false</organismsDiffer>
    <experiments>3</experiments>
</comment>
<comment type="interaction">
    <interactant intactId="EBI-747107">
        <id>Q8IUQ4</id>
    </interactant>
    <interactant intactId="EBI-10188326">
        <id>Q5T5P2-6</id>
        <label>KIAA1217</label>
    </interactant>
    <organismsDiffer>false</organismsDiffer>
    <experiments>3</experiments>
</comment>
<comment type="interaction">
    <interactant intactId="EBI-747107">
        <id>Q8IUQ4</id>
    </interactant>
    <interactant intactId="EBI-465633">
        <id>O60333</id>
        <label>KIF1B</label>
    </interactant>
    <organismsDiffer>false</organismsDiffer>
    <experiments>3</experiments>
</comment>
<comment type="interaction">
    <interactant intactId="EBI-747107">
        <id>Q8IUQ4</id>
    </interactant>
    <interactant intactId="EBI-2125614">
        <id>Q9BVG8</id>
        <label>KIFC3</label>
    </interactant>
    <organismsDiffer>false</organismsDiffer>
    <experiments>3</experiments>
</comment>
<comment type="interaction">
    <interactant intactId="EBI-747107">
        <id>Q8IUQ4</id>
    </interactant>
    <interactant intactId="EBI-3943430">
        <id>Q53H82</id>
        <label>LACTB2</label>
    </interactant>
    <organismsDiffer>false</organismsDiffer>
    <experiments>3</experiments>
</comment>
<comment type="interaction">
    <interactant intactId="EBI-747107">
        <id>Q8IUQ4</id>
    </interactant>
    <interactant intactId="EBI-10229059">
        <id>Q13394</id>
        <label>MAB21L1</label>
    </interactant>
    <organismsDiffer>false</organismsDiffer>
    <experiments>3</experiments>
</comment>
<comment type="interaction">
    <interactant intactId="EBI-747107">
        <id>Q8IUQ4</id>
    </interactant>
    <interactant intactId="EBI-602406">
        <id>P53778</id>
        <label>MAPK12</label>
    </interactant>
    <organismsDiffer>false</organismsDiffer>
    <experiments>3</experiments>
</comment>
<comment type="interaction">
    <interactant intactId="EBI-747107">
        <id>Q8IUQ4</id>
    </interactant>
    <interactant intactId="EBI-947402">
        <id>O60336</id>
        <label>MAPKBP1</label>
    </interactant>
    <organismsDiffer>false</organismsDiffer>
    <experiments>3</experiments>
</comment>
<comment type="interaction">
    <interactant intactId="EBI-747107">
        <id>Q8IUQ4</id>
    </interactant>
    <interactant intactId="EBI-9679267">
        <id>Q70IA8</id>
        <label>MOB3C</label>
    </interactant>
    <organismsDiffer>false</organismsDiffer>
    <experiments>3</experiments>
</comment>
<comment type="interaction">
    <interactant intactId="EBI-747107">
        <id>Q8IUQ4</id>
    </interactant>
    <interactant intactId="EBI-3923617">
        <id>Q9H2K0</id>
        <label>MTIF3</label>
    </interactant>
    <organismsDiffer>false</organismsDiffer>
    <experiments>3</experiments>
</comment>
<comment type="interaction">
    <interactant intactId="EBI-747107">
        <id>Q8IUQ4</id>
    </interactant>
    <interactant intactId="EBI-929476">
        <id>P20591</id>
        <label>MX1</label>
    </interactant>
    <organismsDiffer>false</organismsDiffer>
    <experiments>3</experiments>
</comment>
<comment type="interaction">
    <interactant intactId="EBI-747107">
        <id>Q8IUQ4</id>
    </interactant>
    <interactant intactId="EBI-447677">
        <id>Q99836</id>
        <label>MYD88</label>
    </interactant>
    <organismsDiffer>false</organismsDiffer>
    <experiments>3</experiments>
</comment>
<comment type="interaction">
    <interactant intactId="EBI-747107">
        <id>Q8IUQ4</id>
    </interactant>
    <interactant intactId="EBI-718419">
        <id>Q92692</id>
        <label>NECTIN2</label>
    </interactant>
    <organismsDiffer>false</organismsDiffer>
    <experiments>3</experiments>
</comment>
<comment type="interaction">
    <interactant intactId="EBI-747107">
        <id>Q8IUQ4</id>
    </interactant>
    <interactant intactId="EBI-5461341">
        <id>Q9H3P2</id>
        <label>NELFA</label>
    </interactant>
    <organismsDiffer>false</organismsDiffer>
    <experiments>3</experiments>
</comment>
<comment type="interaction">
    <interactant intactId="EBI-747107">
        <id>Q8IUQ4</id>
    </interactant>
    <interactant intactId="EBI-10307896">
        <id>Q9H6R4-4</id>
        <label>NOL6</label>
    </interactant>
    <organismsDiffer>false</organismsDiffer>
    <experiments>3</experiments>
</comment>
<comment type="interaction">
    <interactant intactId="EBI-747107">
        <id>Q8IUQ4</id>
    </interactant>
    <interactant intactId="EBI-741158">
        <id>Q96HA8</id>
        <label>NTAQ1</label>
    </interactant>
    <organismsDiffer>false</organismsDiffer>
    <experiments>3</experiments>
</comment>
<comment type="interaction">
    <interactant intactId="EBI-747107">
        <id>Q8IUQ4</id>
    </interactant>
    <interactant intactId="EBI-2624570">
        <id>P35372</id>
        <label>OPRM1</label>
    </interactant>
    <organismsDiffer>false</organismsDiffer>
    <experiments>4</experiments>
</comment>
<comment type="interaction">
    <interactant intactId="EBI-747107">
        <id>Q8IUQ4</id>
    </interactant>
    <interactant intactId="EBI-746259">
        <id>Q96DC9</id>
        <label>OTUB2</label>
    </interactant>
    <organismsDiffer>false</organismsDiffer>
    <experiments>3</experiments>
</comment>
<comment type="interaction">
    <interactant intactId="EBI-747107">
        <id>Q8IUQ4</id>
    </interactant>
    <interactant intactId="EBI-2858265">
        <id>Q86TG7</id>
        <label>PEG10</label>
    </interactant>
    <organismsDiffer>false</organismsDiffer>
    <experiments>3</experiments>
</comment>
<comment type="interaction">
    <interactant intactId="EBI-747107">
        <id>Q8IUQ4</id>
    </interactant>
    <interactant intactId="EBI-514788">
        <id>P08237</id>
        <label>PFKM</label>
    </interactant>
    <organismsDiffer>false</organismsDiffer>
    <experiments>3</experiments>
</comment>
<comment type="interaction">
    <interactant intactId="EBI-747107">
        <id>Q8IUQ4</id>
    </interactant>
    <interactant intactId="EBI-713786">
        <id>Q8IXK0</id>
        <label>PHC2</label>
    </interactant>
    <organismsDiffer>false</organismsDiffer>
    <experiments>5</experiments>
</comment>
<comment type="interaction">
    <interactant intactId="EBI-747107">
        <id>Q8IUQ4</id>
    </interactant>
    <interactant intactId="EBI-943588">
        <id>Q16633</id>
        <label>POU2AF1</label>
    </interactant>
    <organismsDiffer>false</organismsDiffer>
    <experiments>2</experiments>
</comment>
<comment type="interaction">
    <interactant intactId="EBI-747107">
        <id>Q8IUQ4</id>
    </interactant>
    <interactant intactId="EBI-1567797">
        <id>Q8WWY3</id>
        <label>PRPF31</label>
    </interactant>
    <organismsDiffer>false</organismsDiffer>
    <experiments>3</experiments>
</comment>
<comment type="interaction">
    <interactant intactId="EBI-747107">
        <id>Q8IUQ4</id>
    </interactant>
    <interactant intactId="EBI-10172814">
        <id>P86479</id>
        <label>PRR20C</label>
    </interactant>
    <organismsDiffer>false</organismsDiffer>
    <experiments>5</experiments>
</comment>
<comment type="interaction">
    <interactant intactId="EBI-747107">
        <id>Q8IUQ4</id>
    </interactant>
    <interactant intactId="EBI-7199479">
        <id>Q8WUK0</id>
        <label>PTPMT1</label>
    </interactant>
    <organismsDiffer>false</organismsDiffer>
    <experiments>3</experiments>
</comment>
<comment type="interaction">
    <interactant intactId="EBI-747107">
        <id>Q8IUQ4</id>
    </interactant>
    <interactant intactId="EBI-1053259">
        <id>Q9UHX1</id>
        <label>PUF60</label>
    </interactant>
    <organismsDiffer>false</organismsDiffer>
    <experiments>7</experiments>
</comment>
<comment type="interaction">
    <interactant intactId="EBI-747107">
        <id>Q8IUQ4</id>
    </interactant>
    <interactant intactId="EBI-1047231">
        <id>P11216</id>
        <label>PYGB</label>
    </interactant>
    <organismsDiffer>false</organismsDiffer>
    <experiments>3</experiments>
</comment>
<comment type="interaction">
    <interactant intactId="EBI-747107">
        <id>Q8IUQ4</id>
    </interactant>
    <interactant intactId="EBI-2798044">
        <id>Q2TAL8</id>
        <label>QRICH1</label>
    </interactant>
    <organismsDiffer>false</organismsDiffer>
    <experiments>3</experiments>
</comment>
<comment type="interaction">
    <interactant intactId="EBI-747107">
        <id>Q8IUQ4</id>
    </interactant>
    <interactant intactId="EBI-744685">
        <id>Q14088</id>
        <label>RAB33A</label>
    </interactant>
    <organismsDiffer>false</organismsDiffer>
    <experiments>3</experiments>
</comment>
<comment type="interaction">
    <interactant intactId="EBI-747107">
        <id>Q8IUQ4</id>
    </interactant>
    <interactant intactId="EBI-1178724">
        <id>Q96B01</id>
        <label>RAD51AP1</label>
    </interactant>
    <organismsDiffer>false</organismsDiffer>
    <experiments>3</experiments>
</comment>
<comment type="interaction">
    <interactant intactId="EBI-747107">
        <id>Q8IUQ4</id>
    </interactant>
    <interactant intactId="EBI-1178743">
        <id>Q96B01-2</id>
        <label>RAD51AP1</label>
    </interactant>
    <organismsDiffer>false</organismsDiffer>
    <experiments>3</experiments>
</comment>
<comment type="interaction">
    <interactant intactId="EBI-747107">
        <id>Q8IUQ4</id>
    </interactant>
    <interactant intactId="EBI-948156">
        <id>Q9Y4B4</id>
        <label>RAD54L2</label>
    </interactant>
    <organismsDiffer>false</organismsDiffer>
    <experiments>3</experiments>
</comment>
<comment type="interaction">
    <interactant intactId="EBI-747107">
        <id>Q8IUQ4</id>
    </interactant>
    <interactant intactId="EBI-4479407">
        <id>Q86WX3</id>
        <label>RPS19BP1</label>
    </interactant>
    <organismsDiffer>false</organismsDiffer>
    <experiments>3</experiments>
</comment>
<comment type="interaction">
    <interactant intactId="EBI-747107">
        <id>Q8IUQ4</id>
    </interactant>
    <interactant intactId="EBI-727004">
        <id>O00560</id>
        <label>SDCBP</label>
    </interactant>
    <organismsDiffer>false</organismsDiffer>
    <experiments>3</experiments>
</comment>
<comment type="interaction">
    <interactant intactId="EBI-747107">
        <id>Q8IUQ4</id>
    </interactant>
    <interactant intactId="EBI-4372019">
        <id>O43236-6</id>
        <label>SEPTIN4</label>
    </interactant>
    <organismsDiffer>false</organismsDiffer>
    <experiments>2</experiments>
</comment>
<comment type="interaction">
    <interactant intactId="EBI-747107">
        <id>Q8IUQ4</id>
    </interactant>
    <interactant intactId="EBI-747107">
        <id>Q8IUQ4</id>
        <label>SIAH1</label>
    </interactant>
    <organismsDiffer>false</organismsDiffer>
    <experiments>3</experiments>
</comment>
<comment type="interaction">
    <interactant intactId="EBI-747107">
        <id>Q8IUQ4</id>
    </interactant>
    <interactant intactId="EBI-7067221">
        <id>Q8NEY3</id>
        <label>SPATA4</label>
    </interactant>
    <organismsDiffer>false</organismsDiffer>
    <experiments>3</experiments>
</comment>
<comment type="interaction">
    <interactant intactId="EBI-747107">
        <id>Q8IUQ4</id>
    </interactant>
    <interactant intactId="EBI-372911">
        <id>Q9H0A9</id>
        <label>SPATC1L</label>
    </interactant>
    <organismsDiffer>false</organismsDiffer>
    <experiments>3</experiments>
</comment>
<comment type="interaction">
    <interactant intactId="EBI-747107">
        <id>Q8IUQ4</id>
    </interactant>
    <interactant intactId="EBI-10184345">
        <id>O43581</id>
        <label>SYT7</label>
    </interactant>
    <organismsDiffer>false</organismsDiffer>
    <experiments>3</experiments>
</comment>
<comment type="interaction">
    <interactant intactId="EBI-747107">
        <id>Q8IUQ4</id>
    </interactant>
    <interactant intactId="EBI-8787464">
        <id>Q9NU19</id>
        <label>TBC1D22B</label>
    </interactant>
    <organismsDiffer>false</organismsDiffer>
    <experiments>3</experiments>
</comment>
<comment type="interaction">
    <interactant intactId="EBI-747107">
        <id>Q8IUQ4</id>
    </interactant>
    <interactant intactId="EBI-721293">
        <id>Q9BTV4</id>
        <label>TMEM43</label>
    </interactant>
    <organismsDiffer>false</organismsDiffer>
    <experiments>3</experiments>
</comment>
<comment type="interaction">
    <interactant intactId="EBI-747107">
        <id>Q8IUQ4</id>
    </interactant>
    <interactant intactId="EBI-10249783">
        <id>Q6FIE9</id>
        <label>TOLLIP</label>
    </interactant>
    <organismsDiffer>false</organismsDiffer>
    <experiments>3</experiments>
</comment>
<comment type="interaction">
    <interactant intactId="EBI-747107">
        <id>Q8IUQ4</id>
    </interactant>
    <interactant intactId="EBI-10175039">
        <id>Q13625-3</id>
        <label>TP53BP2</label>
    </interactant>
    <organismsDiffer>false</organismsDiffer>
    <experiments>3</experiments>
</comment>
<comment type="interaction">
    <interactant intactId="EBI-747107">
        <id>Q8IUQ4</id>
    </interactant>
    <interactant intactId="EBI-740098">
        <id>P36406</id>
        <label>TRIM23</label>
    </interactant>
    <organismsDiffer>false</organismsDiffer>
    <experiments>3</experiments>
</comment>
<comment type="interaction">
    <interactant intactId="EBI-747107">
        <id>Q8IUQ4</id>
    </interactant>
    <interactant intactId="EBI-719493">
        <id>P14373</id>
        <label>TRIM27</label>
    </interactant>
    <organismsDiffer>false</organismsDiffer>
    <experiments>3</experiments>
</comment>
<comment type="interaction">
    <interactant intactId="EBI-747107">
        <id>Q8IUQ4</id>
    </interactant>
    <interactant intactId="EBI-2813981">
        <id>Q9C029</id>
        <label>TRIM7</label>
    </interactant>
    <organismsDiffer>false</organismsDiffer>
    <experiments>3</experiments>
</comment>
<comment type="interaction">
    <interactant intactId="EBI-747107">
        <id>Q8IUQ4</id>
    </interactant>
    <interactant intactId="EBI-473850">
        <id>P61086</id>
        <label>UBE2K</label>
    </interactant>
    <organismsDiffer>false</organismsDiffer>
    <experiments>4</experiments>
</comment>
<comment type="interaction">
    <interactant intactId="EBI-747107">
        <id>Q8IUQ4</id>
    </interactant>
    <interactant intactId="EBI-10191025">
        <id>O95045</id>
        <label>UPP2</label>
    </interactant>
    <organismsDiffer>false</organismsDiffer>
    <experiments>3</experiments>
</comment>
<comment type="interaction">
    <interactant intactId="EBI-747107">
        <id>Q8IUQ4</id>
    </interactant>
    <interactant intactId="EBI-357355">
        <id>Q9UBK9</id>
        <label>UXT</label>
    </interactant>
    <organismsDiffer>false</organismsDiffer>
    <experiments>3</experiments>
</comment>
<comment type="interaction">
    <interactant intactId="EBI-747107">
        <id>Q8IUQ4</id>
    </interactant>
    <interactant intactId="EBI-517127">
        <id>P98170</id>
        <label>XIAP</label>
    </interactant>
    <organismsDiffer>false</organismsDiffer>
    <experiments>3</experiments>
</comment>
<comment type="interaction">
    <interactant intactId="EBI-747107">
        <id>Q8IUQ4</id>
    </interactant>
    <interactant intactId="EBI-10173066">
        <id>A2RRL9</id>
        <label>ZBP1</label>
    </interactant>
    <organismsDiffer>false</organismsDiffer>
    <experiments>3</experiments>
</comment>
<comment type="interaction">
    <interactant intactId="EBI-747107">
        <id>Q8IUQ4</id>
    </interactant>
    <interactant intactId="EBI-597063">
        <id>Q8TBK6</id>
        <label>ZCCHC10</label>
    </interactant>
    <organismsDiffer>false</organismsDiffer>
    <experiments>3</experiments>
</comment>
<comment type="interaction">
    <interactant intactId="EBI-747107">
        <id>Q8IUQ4</id>
    </interactant>
    <interactant intactId="EBI-954111">
        <id>Q8WW36</id>
        <label>ZCCHC13</label>
    </interactant>
    <organismsDiffer>false</organismsDiffer>
    <experiments>3</experiments>
</comment>
<comment type="interaction">
    <interactant intactId="EBI-747107">
        <id>Q8IUQ4</id>
    </interactant>
    <interactant intactId="EBI-2849569">
        <id>Q9BQ24</id>
        <label>ZFYVE21</label>
    </interactant>
    <organismsDiffer>false</organismsDiffer>
    <experiments>3</experiments>
</comment>
<comment type="interaction">
    <interactant intactId="EBI-747107">
        <id>Q8IUQ4</id>
    </interactant>
    <interactant intactId="EBI-2548480">
        <id>Q9HA38</id>
        <label>ZMAT3</label>
    </interactant>
    <organismsDiffer>false</organismsDiffer>
    <experiments>3</experiments>
</comment>
<comment type="interaction">
    <interactant intactId="EBI-747107">
        <id>Q8IUQ4</id>
    </interactant>
    <interactant intactId="EBI-2688184">
        <id>Q9UQR1</id>
        <label>ZNF148</label>
    </interactant>
    <organismsDiffer>false</organismsDiffer>
    <experiments>3</experiments>
</comment>
<comment type="interaction">
    <interactant intactId="EBI-747107">
        <id>Q8IUQ4</id>
    </interactant>
    <interactant intactId="EBI-1049952">
        <id>Q96KM6</id>
        <label>ZNF512B</label>
    </interactant>
    <organismsDiffer>false</organismsDiffer>
    <experiments>3</experiments>
</comment>
<comment type="interaction">
    <interactant intactId="EBI-747107">
        <id>Q8IUQ4</id>
    </interactant>
    <interactant intactId="EBI-10243413">
        <id>Q59GP6</id>
    </interactant>
    <organismsDiffer>false</organismsDiffer>
    <experiments>3</experiments>
</comment>
<comment type="interaction">
    <interactant intactId="EBI-747107">
        <id>Q8IUQ4</id>
    </interactant>
    <interactant intactId="EBI-943530">
        <id>Q64693</id>
        <label>Pou2af1</label>
    </interactant>
    <organismsDiffer>true</organismsDiffer>
    <experiments>5</experiments>
</comment>
<comment type="interaction">
    <interactant intactId="EBI-747107">
        <id>Q8IUQ4</id>
    </interactant>
    <interactant intactId="EBI-957380">
        <id>Q69ZI1</id>
        <label>Sh3rf1</label>
    </interactant>
    <organismsDiffer>true</organismsDiffer>
    <experiments>5</experiments>
</comment>
<comment type="interaction">
    <interactant intactId="EBI-747107">
        <id>Q8IUQ4</id>
    </interactant>
    <interactant intactId="EBI-7088789">
        <id>P69713</id>
        <label>X</label>
    </interactant>
    <organismsDiffer>true</organismsDiffer>
    <experiments>4</experiments>
</comment>
<comment type="interaction">
    <interactant intactId="EBI-11522811">
        <id>Q8IUQ4-2</id>
    </interactant>
    <interactant intactId="EBI-25646567">
        <id>Q06481-5</id>
        <label>APLP2</label>
    </interactant>
    <organismsDiffer>false</organismsDiffer>
    <experiments>3</experiments>
</comment>
<comment type="interaction">
    <interactant intactId="EBI-11522811">
        <id>Q8IUQ4-2</id>
    </interactant>
    <interactant intactId="EBI-77613">
        <id>P05067</id>
        <label>APP</label>
    </interactant>
    <organismsDiffer>false</organismsDiffer>
    <experiments>3</experiments>
</comment>
<comment type="interaction">
    <interactant intactId="EBI-11522811">
        <id>Q8IUQ4-2</id>
    </interactant>
    <interactant intactId="EBI-17264467">
        <id>P05067-2</id>
        <label>APP</label>
    </interactant>
    <organismsDiffer>false</organismsDiffer>
    <experiments>3</experiments>
</comment>
<comment type="interaction">
    <interactant intactId="EBI-11522811">
        <id>Q8IUQ4-2</id>
    </interactant>
    <interactant intactId="EBI-11954292">
        <id>Q86V38</id>
        <label>ATN1</label>
    </interactant>
    <organismsDiffer>false</organismsDiffer>
    <experiments>3</experiments>
</comment>
<comment type="interaction">
    <interactant intactId="EBI-11522811">
        <id>Q8IUQ4-2</id>
    </interactant>
    <interactant intactId="EBI-930964">
        <id>P54253</id>
        <label>ATXN1</label>
    </interactant>
    <organismsDiffer>false</organismsDiffer>
    <experiments>3</experiments>
</comment>
<comment type="interaction">
    <interactant intactId="EBI-11522811">
        <id>Q8IUQ4-2</id>
    </interactant>
    <interactant intactId="EBI-16429430">
        <id>A0A0S2Z4M1</id>
        <label>AXIN1</label>
    </interactant>
    <organismsDiffer>false</organismsDiffer>
    <experiments>3</experiments>
</comment>
<comment type="interaction">
    <interactant intactId="EBI-11522811">
        <id>Q8IUQ4-2</id>
    </interactant>
    <interactant intactId="EBI-747185">
        <id>O95817</id>
        <label>BAG3</label>
    </interactant>
    <organismsDiffer>false</organismsDiffer>
    <experiments>3</experiments>
</comment>
<comment type="interaction">
    <interactant intactId="EBI-11522811">
        <id>Q8IUQ4-2</id>
    </interactant>
    <interactant intactId="EBI-2949658">
        <id>O95429</id>
        <label>BAG4</label>
    </interactant>
    <organismsDiffer>false</organismsDiffer>
    <experiments>3</experiments>
</comment>
<comment type="interaction">
    <interactant intactId="EBI-11522811">
        <id>Q8IUQ4-2</id>
    </interactant>
    <interactant intactId="EBI-21553822">
        <id>Q96A83-2</id>
        <label>COL26A1</label>
    </interactant>
    <organismsDiffer>false</organismsDiffer>
    <experiments>3</experiments>
</comment>
<comment type="interaction">
    <interactant intactId="EBI-11522811">
        <id>Q8IUQ4-2</id>
    </interactant>
    <interactant intactId="EBI-9087876">
        <id>P48730-2</id>
        <label>CSNK1D</label>
    </interactant>
    <organismsDiffer>false</organismsDiffer>
    <experiments>3</experiments>
</comment>
<comment type="interaction">
    <interactant intactId="EBI-11522811">
        <id>Q8IUQ4-2</id>
    </interactant>
    <interactant intactId="EBI-10194422">
        <id>P05111</id>
        <label>INHA</label>
    </interactant>
    <organismsDiffer>false</organismsDiffer>
    <experiments>3</experiments>
</comment>
<comment type="interaction">
    <interactant intactId="EBI-11522811">
        <id>Q8IUQ4-2</id>
    </interactant>
    <interactant intactId="EBI-2432309">
        <id>Q92876</id>
        <label>KLK6</label>
    </interactant>
    <organismsDiffer>false</organismsDiffer>
    <experiments>3</experiments>
</comment>
<comment type="interaction">
    <interactant intactId="EBI-11522811">
        <id>Q8IUQ4-2</id>
    </interactant>
    <interactant intactId="EBI-2510837">
        <id>Q9NS86</id>
        <label>LANCL2</label>
    </interactant>
    <organismsDiffer>false</organismsDiffer>
    <experiments>3</experiments>
</comment>
<comment type="interaction">
    <interactant intactId="EBI-11522811">
        <id>Q8IUQ4-2</id>
    </interactant>
    <interactant intactId="EBI-748182">
        <id>Q8TC57</id>
        <label>M1AP</label>
    </interactant>
    <organismsDiffer>false</organismsDiffer>
    <experiments>3</experiments>
</comment>
<comment type="interaction">
    <interactant intactId="EBI-11522811">
        <id>Q8IUQ4-2</id>
    </interactant>
    <interactant intactId="EBI-726739">
        <id>Q9UPY8</id>
        <label>MAPRE3</label>
    </interactant>
    <organismsDiffer>false</organismsDiffer>
    <experiments>3</experiments>
</comment>
<comment type="interaction">
    <interactant intactId="EBI-11522811">
        <id>Q8IUQ4-2</id>
    </interactant>
    <interactant intactId="EBI-347233">
        <id>O75376</id>
        <label>NCOR1</label>
    </interactant>
    <organismsDiffer>false</organismsDiffer>
    <experiments>3</experiments>
</comment>
<comment type="interaction">
    <interactant intactId="EBI-11522811">
        <id>Q8IUQ4-2</id>
    </interactant>
    <interactant intactId="EBI-2568609">
        <id>Q9BSJ6</id>
        <label>PIMREG</label>
    </interactant>
    <organismsDiffer>false</organismsDiffer>
    <experiments>3</experiments>
</comment>
<comment type="interaction">
    <interactant intactId="EBI-11522811">
        <id>Q8IUQ4-2</id>
    </interactant>
    <interactant intactId="EBI-1567797">
        <id>Q8WWY3</id>
        <label>PRPF31</label>
    </interactant>
    <organismsDiffer>false</organismsDiffer>
    <experiments>3</experiments>
</comment>
<comment type="interaction">
    <interactant intactId="EBI-11522811">
        <id>Q8IUQ4-2</id>
    </interactant>
    <interactant intactId="EBI-12754095">
        <id>P86480</id>
        <label>PRR20D</label>
    </interactant>
    <organismsDiffer>false</organismsDiffer>
    <experiments>3</experiments>
</comment>
<comment type="interaction">
    <interactant intactId="EBI-11522811">
        <id>Q8IUQ4-2</id>
    </interactant>
    <interactant intactId="EBI-3048549">
        <id>Q9H082</id>
        <label>RAB33B</label>
    </interactant>
    <organismsDiffer>false</organismsDiffer>
    <experiments>3</experiments>
</comment>
<comment type="interaction">
    <interactant intactId="EBI-11522811">
        <id>Q8IUQ4-2</id>
    </interactant>
    <interactant intactId="EBI-1178724">
        <id>Q96B01</id>
        <label>RAD51AP1</label>
    </interactant>
    <organismsDiffer>false</organismsDiffer>
    <experiments>3</experiments>
</comment>
<comment type="interaction">
    <interactant intactId="EBI-11522811">
        <id>Q8IUQ4-2</id>
    </interactant>
    <interactant intactId="EBI-16429492">
        <id>P28702-3</id>
        <label>RXRB</label>
    </interactant>
    <organismsDiffer>false</organismsDiffer>
    <experiments>3</experiments>
</comment>
<comment type="interaction">
    <interactant intactId="EBI-11522811">
        <id>Q8IUQ4-2</id>
    </interactant>
    <interactant intactId="EBI-12025260">
        <id>Q5VUG0</id>
        <label>SFMBT2</label>
    </interactant>
    <organismsDiffer>false</organismsDiffer>
    <experiments>3</experiments>
</comment>
<comment type="interaction">
    <interactant intactId="EBI-11522811">
        <id>Q8IUQ4-2</id>
    </interactant>
    <interactant intactId="EBI-372899">
        <id>Q13148</id>
        <label>TARDBP</label>
    </interactant>
    <organismsDiffer>false</organismsDiffer>
    <experiments>3</experiments>
</comment>
<comment type="interaction">
    <interactant intactId="EBI-11522811">
        <id>Q8IUQ4-2</id>
    </interactant>
    <interactant intactId="EBI-721293">
        <id>Q9BTV4</id>
        <label>TMEM43</label>
    </interactant>
    <organismsDiffer>false</organismsDiffer>
    <experiments>3</experiments>
</comment>
<comment type="interaction">
    <interactant intactId="EBI-11522811">
        <id>Q8IUQ4-2</id>
    </interactant>
    <interactant intactId="EBI-473850">
        <id>P61086</id>
        <label>UBE2K</label>
    </interactant>
    <organismsDiffer>false</organismsDiffer>
    <experiments>6</experiments>
</comment>
<comment type="interaction">
    <interactant intactId="EBI-11522811">
        <id>Q8IUQ4-2</id>
    </interactant>
    <interactant intactId="EBI-16440814">
        <id>A0A0S2Z639</id>
        <label>UPP2</label>
    </interactant>
    <organismsDiffer>false</organismsDiffer>
    <experiments>3</experiments>
</comment>
<comment type="interaction">
    <interactant intactId="EBI-11522811">
        <id>Q8IUQ4-2</id>
    </interactant>
    <interactant intactId="EBI-16432858">
        <id>A0A0S2Z6U5</id>
        <label>UPP2</label>
    </interactant>
    <organismsDiffer>false</organismsDiffer>
    <experiments>3</experiments>
</comment>
<comment type="interaction">
    <interactant intactId="EBI-11522811">
        <id>Q8IUQ4-2</id>
    </interactant>
    <interactant intactId="EBI-11528386">
        <id>O95045-2</id>
        <label>UPP2</label>
    </interactant>
    <organismsDiffer>false</organismsDiffer>
    <experiments>6</experiments>
</comment>
<comment type="subcellular location">
    <subcellularLocation>
        <location>Cytoplasm</location>
    </subcellularLocation>
    <subcellularLocation>
        <location>Nucleus</location>
    </subcellularLocation>
    <text>Predominantly cytoplasmic. Partially nuclear.</text>
</comment>
<comment type="alternative products">
    <event type="alternative splicing"/>
    <isoform>
        <id>Q8IUQ4-1</id>
        <name>1</name>
        <sequence type="displayed"/>
    </isoform>
    <isoform>
        <id>Q8IUQ4-2</id>
        <name>2</name>
        <sequence type="described" ref="VSP_010166"/>
    </isoform>
    <isoform>
        <id>Q8IUQ4-3</id>
        <name>3</name>
        <name>Siah-1S</name>
        <sequence type="described" ref="VSP_029210 VSP_029211"/>
    </isoform>
</comment>
<comment type="tissue specificity">
    <text evidence="15 31">Widely expressed at a low level. Down-regulated in advanced hepatocellular carcinomas.</text>
</comment>
<comment type="induction">
    <text>May be induced by p53/TP53, suggesting that it may be required to modulate p53/TP53 response. The relevance of such activity in vivo is however unclear and may not exist.</text>
</comment>
<comment type="domain">
    <text>The RING-type zinc finger domain is essential for ubiquitin ligase activity.</text>
</comment>
<comment type="domain">
    <text evidence="1">The SBD domain (substrate-binding domain) mediates the homodimerization and the interaction with substrate proteins. It is related to the TRAF family.</text>
</comment>
<comment type="PTM">
    <text evidence="23">Phosphorylated on Ser-19 by ATM and ATR. This phosphorylation disrupts SIAH1 interaction with HIPK2, and subsequent proteasomal degradation of HIPK2.</text>
</comment>
<comment type="disease" evidence="28">
    <disease id="DI-06101">
        <name>Buratti-Harel syndrome</name>
        <acronym>BURHAS</acronym>
        <description>An autosomal dominant neurodevelopmental disorder characterized by hypotonia apparent in early infancy, global developmental delay, delayed walking, language and speech delay, impaired intellectual development, and dysmorphic facial features.</description>
        <dbReference type="MIM" id="619314"/>
    </disease>
    <text>The disease is caused by variants affecting the gene represented in this entry.</text>
</comment>
<comment type="similarity">
    <text evidence="37">Belongs to the SINA (Seven in absentia) family.</text>
</comment>